<evidence type="ECO:0000269" key="1">
    <source>
    </source>
</evidence>
<evidence type="ECO:0000269" key="2">
    <source>
    </source>
</evidence>
<evidence type="ECO:0000269" key="3">
    <source>
    </source>
</evidence>
<evidence type="ECO:0000269" key="4">
    <source>
    </source>
</evidence>
<evidence type="ECO:0000269" key="5">
    <source>
    </source>
</evidence>
<evidence type="ECO:0000269" key="6">
    <source>
    </source>
</evidence>
<evidence type="ECO:0000269" key="7">
    <source>
    </source>
</evidence>
<evidence type="ECO:0000269" key="8">
    <source>
    </source>
</evidence>
<evidence type="ECO:0000269" key="9">
    <source>
    </source>
</evidence>
<evidence type="ECO:0000269" key="10">
    <source>
    </source>
</evidence>
<evidence type="ECO:0000269" key="11">
    <source>
    </source>
</evidence>
<evidence type="ECO:0000269" key="12">
    <source>
    </source>
</evidence>
<evidence type="ECO:0000269" key="13">
    <source>
    </source>
</evidence>
<evidence type="ECO:0000269" key="14">
    <source>
    </source>
</evidence>
<evidence type="ECO:0000269" key="15">
    <source>
    </source>
</evidence>
<evidence type="ECO:0000269" key="16">
    <source>
    </source>
</evidence>
<evidence type="ECO:0000269" key="17">
    <source>
    </source>
</evidence>
<evidence type="ECO:0000269" key="18">
    <source ref="4"/>
</evidence>
<evidence type="ECO:0000303" key="19">
    <source>
    </source>
</evidence>
<evidence type="ECO:0000305" key="20"/>
<evidence type="ECO:0007829" key="21">
    <source>
        <dbReference type="PDB" id="1B75"/>
    </source>
</evidence>
<evidence type="ECO:0007829" key="22">
    <source>
        <dbReference type="PDB" id="8CGK"/>
    </source>
</evidence>
<dbReference type="EMBL" id="D13326">
    <property type="protein sequence ID" value="BAA02585.1"/>
    <property type="molecule type" value="Genomic_DNA"/>
</dbReference>
<dbReference type="EMBL" id="U00008">
    <property type="protein sequence ID" value="AAA16413.1"/>
    <property type="molecule type" value="Genomic_DNA"/>
</dbReference>
<dbReference type="EMBL" id="U00096">
    <property type="protein sequence ID" value="AAC75246.1"/>
    <property type="molecule type" value="Genomic_DNA"/>
</dbReference>
<dbReference type="EMBL" id="AP009048">
    <property type="protein sequence ID" value="BAE76650.1"/>
    <property type="molecule type" value="Genomic_DNA"/>
</dbReference>
<dbReference type="PIR" id="S16002">
    <property type="entry name" value="R5EC25"/>
</dbReference>
<dbReference type="RefSeq" id="NP_416690.1">
    <property type="nucleotide sequence ID" value="NC_000913.3"/>
</dbReference>
<dbReference type="RefSeq" id="WP_000494183.1">
    <property type="nucleotide sequence ID" value="NZ_STEB01000002.1"/>
</dbReference>
<dbReference type="PDB" id="1B75">
    <property type="method" value="NMR"/>
    <property type="chains" value="A=1-94"/>
</dbReference>
<dbReference type="PDB" id="1D6K">
    <property type="method" value="NMR"/>
    <property type="chains" value="A=1-94"/>
</dbReference>
<dbReference type="PDB" id="1DFU">
    <property type="method" value="X-ray"/>
    <property type="resolution" value="1.80 A"/>
    <property type="chains" value="P=1-94"/>
</dbReference>
<dbReference type="PDB" id="1ML5">
    <property type="method" value="EM"/>
    <property type="resolution" value="14.00 A"/>
    <property type="chains" value="v=1-94"/>
</dbReference>
<dbReference type="PDB" id="2J28">
    <property type="method" value="EM"/>
    <property type="resolution" value="8.00 A"/>
    <property type="chains" value="V=1-94"/>
</dbReference>
<dbReference type="PDB" id="2RDO">
    <property type="method" value="EM"/>
    <property type="resolution" value="9.10 A"/>
    <property type="chains" value="V=1-94"/>
</dbReference>
<dbReference type="PDB" id="3BBX">
    <property type="method" value="EM"/>
    <property type="resolution" value="10.00 A"/>
    <property type="chains" value="V=1-94"/>
</dbReference>
<dbReference type="PDB" id="3J5L">
    <property type="method" value="EM"/>
    <property type="resolution" value="6.60 A"/>
    <property type="chains" value="V=1-94"/>
</dbReference>
<dbReference type="PDB" id="3J7Z">
    <property type="method" value="EM"/>
    <property type="resolution" value="3.90 A"/>
    <property type="chains" value="V=1-94"/>
</dbReference>
<dbReference type="PDB" id="3J8G">
    <property type="method" value="EM"/>
    <property type="resolution" value="5.00 A"/>
    <property type="chains" value="W=1-94"/>
</dbReference>
<dbReference type="PDB" id="3J9Y">
    <property type="method" value="EM"/>
    <property type="resolution" value="3.90 A"/>
    <property type="chains" value="V=1-94"/>
</dbReference>
<dbReference type="PDB" id="3J9Z">
    <property type="method" value="EM"/>
    <property type="resolution" value="3.60 A"/>
    <property type="chains" value="LT=1-94"/>
</dbReference>
<dbReference type="PDB" id="3JA1">
    <property type="method" value="EM"/>
    <property type="resolution" value="3.60 A"/>
    <property type="chains" value="LX=1-94"/>
</dbReference>
<dbReference type="PDB" id="3JBU">
    <property type="method" value="EM"/>
    <property type="resolution" value="3.64 A"/>
    <property type="chains" value="w=1-94"/>
</dbReference>
<dbReference type="PDB" id="3JBV">
    <property type="method" value="EM"/>
    <property type="resolution" value="3.32 A"/>
    <property type="chains" value="w=1-94"/>
</dbReference>
<dbReference type="PDB" id="3JCD">
    <property type="method" value="EM"/>
    <property type="resolution" value="3.70 A"/>
    <property type="chains" value="V=1-94"/>
</dbReference>
<dbReference type="PDB" id="3JCE">
    <property type="method" value="EM"/>
    <property type="resolution" value="3.20 A"/>
    <property type="chains" value="V=1-94"/>
</dbReference>
<dbReference type="PDB" id="3JCJ">
    <property type="method" value="EM"/>
    <property type="resolution" value="3.70 A"/>
    <property type="chains" value="U=1-94"/>
</dbReference>
<dbReference type="PDB" id="3JCN">
    <property type="method" value="EM"/>
    <property type="resolution" value="4.60 A"/>
    <property type="chains" value="V=1-94"/>
</dbReference>
<dbReference type="PDB" id="487D">
    <property type="method" value="EM"/>
    <property type="resolution" value="7.50 A"/>
    <property type="chains" value="N=1-94"/>
</dbReference>
<dbReference type="PDB" id="4CSU">
    <property type="method" value="EM"/>
    <property type="resolution" value="5.50 A"/>
    <property type="chains" value="W=1-94"/>
</dbReference>
<dbReference type="PDB" id="4U1U">
    <property type="method" value="X-ray"/>
    <property type="resolution" value="2.95 A"/>
    <property type="chains" value="BV/DV=1-94"/>
</dbReference>
<dbReference type="PDB" id="4U1V">
    <property type="method" value="X-ray"/>
    <property type="resolution" value="3.00 A"/>
    <property type="chains" value="BV/DV=1-94"/>
</dbReference>
<dbReference type="PDB" id="4U20">
    <property type="method" value="X-ray"/>
    <property type="resolution" value="2.90 A"/>
    <property type="chains" value="BV/DV=1-94"/>
</dbReference>
<dbReference type="PDB" id="4U24">
    <property type="method" value="X-ray"/>
    <property type="resolution" value="2.90 A"/>
    <property type="chains" value="BV/DV=1-94"/>
</dbReference>
<dbReference type="PDB" id="4U25">
    <property type="method" value="X-ray"/>
    <property type="resolution" value="2.90 A"/>
    <property type="chains" value="BV/DV=1-94"/>
</dbReference>
<dbReference type="PDB" id="4U26">
    <property type="method" value="X-ray"/>
    <property type="resolution" value="2.80 A"/>
    <property type="chains" value="BV/DV=1-94"/>
</dbReference>
<dbReference type="PDB" id="4U27">
    <property type="method" value="X-ray"/>
    <property type="resolution" value="2.80 A"/>
    <property type="chains" value="BV/DV=1-94"/>
</dbReference>
<dbReference type="PDB" id="4UY8">
    <property type="method" value="EM"/>
    <property type="resolution" value="3.80 A"/>
    <property type="chains" value="8=1-94"/>
</dbReference>
<dbReference type="PDB" id="4V42">
    <property type="method" value="X-ray"/>
    <property type="resolution" value="5.50 A"/>
    <property type="chains" value="BV=1-94"/>
</dbReference>
<dbReference type="PDB" id="4V47">
    <property type="method" value="EM"/>
    <property type="resolution" value="12.30 A"/>
    <property type="chains" value="AT=1-94"/>
</dbReference>
<dbReference type="PDB" id="4V48">
    <property type="method" value="EM"/>
    <property type="resolution" value="11.50 A"/>
    <property type="chains" value="AT=1-94"/>
</dbReference>
<dbReference type="PDB" id="4V4H">
    <property type="method" value="X-ray"/>
    <property type="resolution" value="3.46 A"/>
    <property type="chains" value="BV/DV=1-94"/>
</dbReference>
<dbReference type="PDB" id="4V4Q">
    <property type="method" value="X-ray"/>
    <property type="resolution" value="3.46 A"/>
    <property type="chains" value="BV/DV=1-94"/>
</dbReference>
<dbReference type="PDB" id="4V4V">
    <property type="method" value="EM"/>
    <property type="resolution" value="15.00 A"/>
    <property type="chains" value="BT=1-94"/>
</dbReference>
<dbReference type="PDB" id="4V4W">
    <property type="method" value="EM"/>
    <property type="resolution" value="15.00 A"/>
    <property type="chains" value="BT=1-94"/>
</dbReference>
<dbReference type="PDB" id="4V50">
    <property type="method" value="X-ray"/>
    <property type="resolution" value="3.22 A"/>
    <property type="chains" value="BV/DV=1-94"/>
</dbReference>
<dbReference type="PDB" id="4V52">
    <property type="method" value="X-ray"/>
    <property type="resolution" value="3.21 A"/>
    <property type="chains" value="BV/DV=1-94"/>
</dbReference>
<dbReference type="PDB" id="4V53">
    <property type="method" value="X-ray"/>
    <property type="resolution" value="3.54 A"/>
    <property type="chains" value="BV/DV=1-94"/>
</dbReference>
<dbReference type="PDB" id="4V54">
    <property type="method" value="X-ray"/>
    <property type="resolution" value="3.30 A"/>
    <property type="chains" value="BV/DV=1-94"/>
</dbReference>
<dbReference type="PDB" id="4V55">
    <property type="method" value="X-ray"/>
    <property type="resolution" value="4.00 A"/>
    <property type="chains" value="BV/DV=1-94"/>
</dbReference>
<dbReference type="PDB" id="4V56">
    <property type="method" value="X-ray"/>
    <property type="resolution" value="3.93 A"/>
    <property type="chains" value="BV/DV=1-94"/>
</dbReference>
<dbReference type="PDB" id="4V57">
    <property type="method" value="X-ray"/>
    <property type="resolution" value="3.50 A"/>
    <property type="chains" value="BV/DV=1-94"/>
</dbReference>
<dbReference type="PDB" id="4V5B">
    <property type="method" value="X-ray"/>
    <property type="resolution" value="3.74 A"/>
    <property type="chains" value="AV/CV=1-94"/>
</dbReference>
<dbReference type="PDB" id="4V5H">
    <property type="method" value="EM"/>
    <property type="resolution" value="5.80 A"/>
    <property type="chains" value="BW=1-94"/>
</dbReference>
<dbReference type="PDB" id="4V5Y">
    <property type="method" value="X-ray"/>
    <property type="resolution" value="4.45 A"/>
    <property type="chains" value="BV/DV=1-94"/>
</dbReference>
<dbReference type="PDB" id="4V64">
    <property type="method" value="X-ray"/>
    <property type="resolution" value="3.50 A"/>
    <property type="chains" value="BV/DV=1-94"/>
</dbReference>
<dbReference type="PDB" id="4V65">
    <property type="method" value="EM"/>
    <property type="resolution" value="9.00 A"/>
    <property type="chains" value="BC=1-94"/>
</dbReference>
<dbReference type="PDB" id="4V66">
    <property type="method" value="EM"/>
    <property type="resolution" value="9.00 A"/>
    <property type="chains" value="BC=1-94"/>
</dbReference>
<dbReference type="PDB" id="4V69">
    <property type="method" value="EM"/>
    <property type="resolution" value="6.70 A"/>
    <property type="chains" value="BV=1-94"/>
</dbReference>
<dbReference type="PDB" id="4V6C">
    <property type="method" value="X-ray"/>
    <property type="resolution" value="3.19 A"/>
    <property type="chains" value="BV/DV=1-94"/>
</dbReference>
<dbReference type="PDB" id="4V6D">
    <property type="method" value="X-ray"/>
    <property type="resolution" value="3.81 A"/>
    <property type="chains" value="BV/DV=1-94"/>
</dbReference>
<dbReference type="PDB" id="4V6E">
    <property type="method" value="X-ray"/>
    <property type="resolution" value="3.71 A"/>
    <property type="chains" value="BV/DV=1-94"/>
</dbReference>
<dbReference type="PDB" id="4V6K">
    <property type="method" value="EM"/>
    <property type="resolution" value="8.25 A"/>
    <property type="chains" value="AW=1-94"/>
</dbReference>
<dbReference type="PDB" id="4V6L">
    <property type="method" value="EM"/>
    <property type="resolution" value="13.20 A"/>
    <property type="chains" value="BW=1-94"/>
</dbReference>
<dbReference type="PDB" id="4V6M">
    <property type="method" value="EM"/>
    <property type="resolution" value="7.10 A"/>
    <property type="chains" value="BV=1-94"/>
</dbReference>
<dbReference type="PDB" id="4V6N">
    <property type="method" value="EM"/>
    <property type="resolution" value="12.10 A"/>
    <property type="chains" value="AX=1-94"/>
</dbReference>
<dbReference type="PDB" id="4V6O">
    <property type="method" value="EM"/>
    <property type="resolution" value="14.70 A"/>
    <property type="chains" value="BX=1-94"/>
</dbReference>
<dbReference type="PDB" id="4V6P">
    <property type="method" value="EM"/>
    <property type="resolution" value="13.50 A"/>
    <property type="chains" value="BX=1-94"/>
</dbReference>
<dbReference type="PDB" id="4V6Q">
    <property type="method" value="EM"/>
    <property type="resolution" value="11.50 A"/>
    <property type="chains" value="BX=1-94"/>
</dbReference>
<dbReference type="PDB" id="4V6R">
    <property type="method" value="EM"/>
    <property type="resolution" value="11.50 A"/>
    <property type="chains" value="BX=1-94"/>
</dbReference>
<dbReference type="PDB" id="4V6S">
    <property type="method" value="EM"/>
    <property type="resolution" value="13.10 A"/>
    <property type="chains" value="AX=1-94"/>
</dbReference>
<dbReference type="PDB" id="4V6T">
    <property type="method" value="EM"/>
    <property type="resolution" value="8.30 A"/>
    <property type="chains" value="BV=1-94"/>
</dbReference>
<dbReference type="PDB" id="4V6V">
    <property type="method" value="EM"/>
    <property type="resolution" value="9.80 A"/>
    <property type="chains" value="BZ=1-94"/>
</dbReference>
<dbReference type="PDB" id="4V6Y">
    <property type="method" value="EM"/>
    <property type="resolution" value="12.00 A"/>
    <property type="chains" value="BV=1-94"/>
</dbReference>
<dbReference type="PDB" id="4V6Z">
    <property type="method" value="EM"/>
    <property type="resolution" value="12.00 A"/>
    <property type="chains" value="BV=1-94"/>
</dbReference>
<dbReference type="PDB" id="4V70">
    <property type="method" value="EM"/>
    <property type="resolution" value="17.00 A"/>
    <property type="chains" value="BV=1-94"/>
</dbReference>
<dbReference type="PDB" id="4V71">
    <property type="method" value="EM"/>
    <property type="resolution" value="20.00 A"/>
    <property type="chains" value="BV=1-94"/>
</dbReference>
<dbReference type="PDB" id="4V72">
    <property type="method" value="EM"/>
    <property type="resolution" value="13.00 A"/>
    <property type="chains" value="BV=1-94"/>
</dbReference>
<dbReference type="PDB" id="4V73">
    <property type="method" value="EM"/>
    <property type="resolution" value="15.00 A"/>
    <property type="chains" value="BV=1-94"/>
</dbReference>
<dbReference type="PDB" id="4V74">
    <property type="method" value="EM"/>
    <property type="resolution" value="17.00 A"/>
    <property type="chains" value="BV=1-94"/>
</dbReference>
<dbReference type="PDB" id="4V75">
    <property type="method" value="EM"/>
    <property type="resolution" value="12.00 A"/>
    <property type="chains" value="BV=1-94"/>
</dbReference>
<dbReference type="PDB" id="4V76">
    <property type="method" value="EM"/>
    <property type="resolution" value="17.00 A"/>
    <property type="chains" value="BV=1-94"/>
</dbReference>
<dbReference type="PDB" id="4V77">
    <property type="method" value="EM"/>
    <property type="resolution" value="17.00 A"/>
    <property type="chains" value="BV=1-94"/>
</dbReference>
<dbReference type="PDB" id="4V78">
    <property type="method" value="EM"/>
    <property type="resolution" value="20.00 A"/>
    <property type="chains" value="BV=1-94"/>
</dbReference>
<dbReference type="PDB" id="4V79">
    <property type="method" value="EM"/>
    <property type="resolution" value="15.00 A"/>
    <property type="chains" value="BV=1-94"/>
</dbReference>
<dbReference type="PDB" id="4V7A">
    <property type="method" value="EM"/>
    <property type="resolution" value="9.00 A"/>
    <property type="chains" value="BV=1-94"/>
</dbReference>
<dbReference type="PDB" id="4V7B">
    <property type="method" value="EM"/>
    <property type="resolution" value="6.80 A"/>
    <property type="chains" value="BV=1-94"/>
</dbReference>
<dbReference type="PDB" id="4V7C">
    <property type="method" value="EM"/>
    <property type="resolution" value="7.60 A"/>
    <property type="chains" value="BX=1-94"/>
</dbReference>
<dbReference type="PDB" id="4V7D">
    <property type="method" value="EM"/>
    <property type="resolution" value="7.60 A"/>
    <property type="chains" value="AY=1-94"/>
</dbReference>
<dbReference type="PDB" id="4V7I">
    <property type="method" value="EM"/>
    <property type="resolution" value="9.60 A"/>
    <property type="chains" value="AV=1-94"/>
</dbReference>
<dbReference type="PDB" id="4V7S">
    <property type="method" value="X-ray"/>
    <property type="resolution" value="3.25 A"/>
    <property type="chains" value="BV/DV=1-94"/>
</dbReference>
<dbReference type="PDB" id="4V7T">
    <property type="method" value="X-ray"/>
    <property type="resolution" value="3.19 A"/>
    <property type="chains" value="BV/DV=1-94"/>
</dbReference>
<dbReference type="PDB" id="4V7U">
    <property type="method" value="X-ray"/>
    <property type="resolution" value="3.10 A"/>
    <property type="chains" value="BV/DV=1-94"/>
</dbReference>
<dbReference type="PDB" id="4V7V">
    <property type="method" value="X-ray"/>
    <property type="resolution" value="3.29 A"/>
    <property type="chains" value="BV/DV=1-94"/>
</dbReference>
<dbReference type="PDB" id="4V85">
    <property type="method" value="X-ray"/>
    <property type="resolution" value="3.20 A"/>
    <property type="chains" value="BZ=1-94"/>
</dbReference>
<dbReference type="PDB" id="4V89">
    <property type="method" value="X-ray"/>
    <property type="resolution" value="3.70 A"/>
    <property type="chains" value="BZ=1-94"/>
</dbReference>
<dbReference type="PDB" id="4V9C">
    <property type="method" value="X-ray"/>
    <property type="resolution" value="3.30 A"/>
    <property type="chains" value="BV/DV=1-94"/>
</dbReference>
<dbReference type="PDB" id="4V9D">
    <property type="method" value="X-ray"/>
    <property type="resolution" value="3.00 A"/>
    <property type="chains" value="CV/DV=1-94"/>
</dbReference>
<dbReference type="PDB" id="4V9O">
    <property type="method" value="X-ray"/>
    <property type="resolution" value="2.90 A"/>
    <property type="chains" value="AV/CV/EV/GV=1-94"/>
</dbReference>
<dbReference type="PDB" id="4V9P">
    <property type="method" value="X-ray"/>
    <property type="resolution" value="2.90 A"/>
    <property type="chains" value="AV/CV/EV/GV=1-94"/>
</dbReference>
<dbReference type="PDB" id="4WF1">
    <property type="method" value="X-ray"/>
    <property type="resolution" value="3.09 A"/>
    <property type="chains" value="BV/DV=1-94"/>
</dbReference>
<dbReference type="PDB" id="4WOI">
    <property type="method" value="X-ray"/>
    <property type="resolution" value="3.00 A"/>
    <property type="chains" value="BV/CV=1-94"/>
</dbReference>
<dbReference type="PDB" id="4WWW">
    <property type="method" value="X-ray"/>
    <property type="resolution" value="3.10 A"/>
    <property type="chains" value="RV/YV=1-94"/>
</dbReference>
<dbReference type="PDB" id="4YBB">
    <property type="method" value="X-ray"/>
    <property type="resolution" value="2.10 A"/>
    <property type="chains" value="CW/DW=1-94"/>
</dbReference>
<dbReference type="PDB" id="5ADY">
    <property type="method" value="EM"/>
    <property type="resolution" value="4.50 A"/>
    <property type="chains" value="V=1-94"/>
</dbReference>
<dbReference type="PDB" id="5AFI">
    <property type="method" value="EM"/>
    <property type="resolution" value="2.90 A"/>
    <property type="chains" value="V=1-94"/>
</dbReference>
<dbReference type="PDB" id="5AKA">
    <property type="method" value="EM"/>
    <property type="resolution" value="5.70 A"/>
    <property type="chains" value="V=1-94"/>
</dbReference>
<dbReference type="PDB" id="5GAD">
    <property type="method" value="EM"/>
    <property type="resolution" value="3.70 A"/>
    <property type="chains" value="W=1-94"/>
</dbReference>
<dbReference type="PDB" id="5GAE">
    <property type="method" value="EM"/>
    <property type="resolution" value="3.33 A"/>
    <property type="chains" value="W=1-94"/>
</dbReference>
<dbReference type="PDB" id="5GAF">
    <property type="method" value="EM"/>
    <property type="resolution" value="4.30 A"/>
    <property type="chains" value="W=1-94"/>
</dbReference>
<dbReference type="PDB" id="5GAG">
    <property type="method" value="EM"/>
    <property type="resolution" value="3.80 A"/>
    <property type="chains" value="W=1-94"/>
</dbReference>
<dbReference type="PDB" id="5GAH">
    <property type="method" value="EM"/>
    <property type="resolution" value="3.80 A"/>
    <property type="chains" value="W=1-94"/>
</dbReference>
<dbReference type="PDB" id="5H5U">
    <property type="method" value="EM"/>
    <property type="resolution" value="3.00 A"/>
    <property type="chains" value="W=1-94"/>
</dbReference>
<dbReference type="PDB" id="5IQR">
    <property type="method" value="EM"/>
    <property type="resolution" value="3.00 A"/>
    <property type="chains" value="V=1-94"/>
</dbReference>
<dbReference type="PDB" id="5IT8">
    <property type="method" value="X-ray"/>
    <property type="resolution" value="3.12 A"/>
    <property type="chains" value="CW/DW=1-94"/>
</dbReference>
<dbReference type="PDB" id="5J5B">
    <property type="method" value="X-ray"/>
    <property type="resolution" value="2.80 A"/>
    <property type="chains" value="CW/DW=1-94"/>
</dbReference>
<dbReference type="PDB" id="5J7L">
    <property type="method" value="X-ray"/>
    <property type="resolution" value="3.00 A"/>
    <property type="chains" value="CW/DW=1-94"/>
</dbReference>
<dbReference type="PDB" id="5J88">
    <property type="method" value="X-ray"/>
    <property type="resolution" value="3.32 A"/>
    <property type="chains" value="CW/DW=1-94"/>
</dbReference>
<dbReference type="PDB" id="5J8A">
    <property type="method" value="X-ray"/>
    <property type="resolution" value="3.10 A"/>
    <property type="chains" value="CW/DW=1-94"/>
</dbReference>
<dbReference type="PDB" id="5J91">
    <property type="method" value="X-ray"/>
    <property type="resolution" value="2.96 A"/>
    <property type="chains" value="CW/DW=1-94"/>
</dbReference>
<dbReference type="PDB" id="5JC9">
    <property type="method" value="X-ray"/>
    <property type="resolution" value="3.03 A"/>
    <property type="chains" value="CW/DW=1-94"/>
</dbReference>
<dbReference type="PDB" id="5JTE">
    <property type="method" value="EM"/>
    <property type="resolution" value="3.60 A"/>
    <property type="chains" value="BV=1-94"/>
</dbReference>
<dbReference type="PDB" id="5JU8">
    <property type="method" value="EM"/>
    <property type="resolution" value="3.60 A"/>
    <property type="chains" value="BV=1-94"/>
</dbReference>
<dbReference type="PDB" id="5KCR">
    <property type="method" value="EM"/>
    <property type="resolution" value="3.60 A"/>
    <property type="chains" value="1Z=1-94"/>
</dbReference>
<dbReference type="PDB" id="5KCS">
    <property type="method" value="EM"/>
    <property type="resolution" value="3.90 A"/>
    <property type="chains" value="1Z=1-94"/>
</dbReference>
<dbReference type="PDB" id="5KPS">
    <property type="method" value="EM"/>
    <property type="resolution" value="3.90 A"/>
    <property type="chains" value="V=1-94"/>
</dbReference>
<dbReference type="PDB" id="5KPV">
    <property type="method" value="EM"/>
    <property type="resolution" value="4.10 A"/>
    <property type="chains" value="U=1-94"/>
</dbReference>
<dbReference type="PDB" id="5KPW">
    <property type="method" value="EM"/>
    <property type="resolution" value="3.90 A"/>
    <property type="chains" value="U=1-94"/>
</dbReference>
<dbReference type="PDB" id="5KPX">
    <property type="method" value="EM"/>
    <property type="resolution" value="3.90 A"/>
    <property type="chains" value="U=1-94"/>
</dbReference>
<dbReference type="PDB" id="5L3P">
    <property type="method" value="EM"/>
    <property type="resolution" value="3.70 A"/>
    <property type="chains" value="Z=1-94"/>
</dbReference>
<dbReference type="PDB" id="5LZA">
    <property type="method" value="EM"/>
    <property type="resolution" value="3.60 A"/>
    <property type="chains" value="V=1-94"/>
</dbReference>
<dbReference type="PDB" id="5LZB">
    <property type="method" value="EM"/>
    <property type="resolution" value="5.30 A"/>
    <property type="chains" value="V=1-94"/>
</dbReference>
<dbReference type="PDB" id="5LZC">
    <property type="method" value="EM"/>
    <property type="resolution" value="4.80 A"/>
    <property type="chains" value="V=1-94"/>
</dbReference>
<dbReference type="PDB" id="5LZD">
    <property type="method" value="EM"/>
    <property type="resolution" value="3.40 A"/>
    <property type="chains" value="V=1-94"/>
</dbReference>
<dbReference type="PDB" id="5LZE">
    <property type="method" value="EM"/>
    <property type="resolution" value="3.50 A"/>
    <property type="chains" value="V=1-94"/>
</dbReference>
<dbReference type="PDB" id="5LZF">
    <property type="method" value="EM"/>
    <property type="resolution" value="4.60 A"/>
    <property type="chains" value="V=1-94"/>
</dbReference>
<dbReference type="PDB" id="5MDV">
    <property type="method" value="EM"/>
    <property type="resolution" value="2.97 A"/>
    <property type="chains" value="V=1-94"/>
</dbReference>
<dbReference type="PDB" id="5MDW">
    <property type="method" value="EM"/>
    <property type="resolution" value="3.06 A"/>
    <property type="chains" value="V=1-94"/>
</dbReference>
<dbReference type="PDB" id="5MDY">
    <property type="method" value="EM"/>
    <property type="resolution" value="3.35 A"/>
    <property type="chains" value="V=1-94"/>
</dbReference>
<dbReference type="PDB" id="5MDZ">
    <property type="method" value="EM"/>
    <property type="resolution" value="3.10 A"/>
    <property type="chains" value="V=1-94"/>
</dbReference>
<dbReference type="PDB" id="5MGP">
    <property type="method" value="EM"/>
    <property type="resolution" value="3.10 A"/>
    <property type="chains" value="V=1-94"/>
</dbReference>
<dbReference type="PDB" id="5NCO">
    <property type="method" value="EM"/>
    <property type="resolution" value="4.80 A"/>
    <property type="chains" value="W=1-94"/>
</dbReference>
<dbReference type="PDB" id="5NP6">
    <property type="method" value="EM"/>
    <property type="resolution" value="3.60 A"/>
    <property type="chains" value="t=1-94"/>
</dbReference>
<dbReference type="PDB" id="5NWY">
    <property type="method" value="EM"/>
    <property type="resolution" value="2.93 A"/>
    <property type="chains" value="i=1-94"/>
</dbReference>
<dbReference type="PDB" id="5O2R">
    <property type="method" value="EM"/>
    <property type="resolution" value="3.40 A"/>
    <property type="chains" value="V=1-94"/>
</dbReference>
<dbReference type="PDB" id="5U4I">
    <property type="method" value="EM"/>
    <property type="resolution" value="3.50 A"/>
    <property type="chains" value="W=1-94"/>
</dbReference>
<dbReference type="PDB" id="5U9F">
    <property type="method" value="EM"/>
    <property type="resolution" value="3.20 A"/>
    <property type="chains" value="24=1-94"/>
</dbReference>
<dbReference type="PDB" id="5U9G">
    <property type="method" value="EM"/>
    <property type="resolution" value="3.20 A"/>
    <property type="chains" value="24=1-94"/>
</dbReference>
<dbReference type="PDB" id="5UYK">
    <property type="method" value="EM"/>
    <property type="resolution" value="3.90 A"/>
    <property type="chains" value="24=1-94"/>
</dbReference>
<dbReference type="PDB" id="5UYL">
    <property type="method" value="EM"/>
    <property type="resolution" value="3.60 A"/>
    <property type="chains" value="24=1-94"/>
</dbReference>
<dbReference type="PDB" id="5UYM">
    <property type="method" value="EM"/>
    <property type="resolution" value="3.20 A"/>
    <property type="chains" value="24=1-94"/>
</dbReference>
<dbReference type="PDB" id="5UYN">
    <property type="method" value="EM"/>
    <property type="resolution" value="4.00 A"/>
    <property type="chains" value="24=1-94"/>
</dbReference>
<dbReference type="PDB" id="5UYP">
    <property type="method" value="EM"/>
    <property type="resolution" value="3.90 A"/>
    <property type="chains" value="24=1-94"/>
</dbReference>
<dbReference type="PDB" id="5UYQ">
    <property type="method" value="EM"/>
    <property type="resolution" value="3.80 A"/>
    <property type="chains" value="24=1-94"/>
</dbReference>
<dbReference type="PDB" id="5WDT">
    <property type="method" value="EM"/>
    <property type="resolution" value="3.00 A"/>
    <property type="chains" value="V=2-93"/>
</dbReference>
<dbReference type="PDB" id="5WE4">
    <property type="method" value="EM"/>
    <property type="resolution" value="3.10 A"/>
    <property type="chains" value="V=2-93"/>
</dbReference>
<dbReference type="PDB" id="5WE6">
    <property type="method" value="EM"/>
    <property type="resolution" value="3.40 A"/>
    <property type="chains" value="V=2-93"/>
</dbReference>
<dbReference type="PDB" id="5WF0">
    <property type="method" value="EM"/>
    <property type="resolution" value="3.60 A"/>
    <property type="chains" value="V=2-93"/>
</dbReference>
<dbReference type="PDB" id="5WFK">
    <property type="method" value="EM"/>
    <property type="resolution" value="3.40 A"/>
    <property type="chains" value="V=2-93"/>
</dbReference>
<dbReference type="PDB" id="5WFS">
    <property type="method" value="EM"/>
    <property type="resolution" value="3.00 A"/>
    <property type="chains" value="V=2-93"/>
</dbReference>
<dbReference type="PDB" id="6BU8">
    <property type="method" value="EM"/>
    <property type="resolution" value="3.50 A"/>
    <property type="chains" value="24=1-94"/>
</dbReference>
<dbReference type="PDB" id="6BY1">
    <property type="method" value="X-ray"/>
    <property type="resolution" value="3.94 A"/>
    <property type="chains" value="CV/DV=1-94"/>
</dbReference>
<dbReference type="PDB" id="6C4I">
    <property type="method" value="EM"/>
    <property type="resolution" value="3.24 A"/>
    <property type="chains" value="W=1-94"/>
</dbReference>
<dbReference type="PDB" id="6DNC">
    <property type="method" value="EM"/>
    <property type="resolution" value="3.70 A"/>
    <property type="chains" value="Z=1-94"/>
</dbReference>
<dbReference type="PDB" id="6ENF">
    <property type="method" value="EM"/>
    <property type="resolution" value="3.20 A"/>
    <property type="chains" value="V=1-94"/>
</dbReference>
<dbReference type="PDB" id="6ENJ">
    <property type="method" value="EM"/>
    <property type="resolution" value="3.70 A"/>
    <property type="chains" value="V=1-94"/>
</dbReference>
<dbReference type="PDB" id="6ENU">
    <property type="method" value="EM"/>
    <property type="resolution" value="3.10 A"/>
    <property type="chains" value="V=1-94"/>
</dbReference>
<dbReference type="PDB" id="6GBZ">
    <property type="method" value="EM"/>
    <property type="resolution" value="3.80 A"/>
    <property type="chains" value="V=1-94"/>
</dbReference>
<dbReference type="PDB" id="6GC0">
    <property type="method" value="EM"/>
    <property type="resolution" value="3.80 A"/>
    <property type="chains" value="V=1-94"/>
</dbReference>
<dbReference type="PDB" id="6GC4">
    <property type="method" value="EM"/>
    <property type="resolution" value="4.30 A"/>
    <property type="chains" value="V=1-94"/>
</dbReference>
<dbReference type="PDB" id="6GC8">
    <property type="method" value="EM"/>
    <property type="resolution" value="3.80 A"/>
    <property type="chains" value="V=1-94"/>
</dbReference>
<dbReference type="PDB" id="6GWT">
    <property type="method" value="EM"/>
    <property type="resolution" value="3.80 A"/>
    <property type="chains" value="V=1-94"/>
</dbReference>
<dbReference type="PDB" id="6GXM">
    <property type="method" value="EM"/>
    <property type="resolution" value="3.80 A"/>
    <property type="chains" value="V=1-94"/>
</dbReference>
<dbReference type="PDB" id="6GXN">
    <property type="method" value="EM"/>
    <property type="resolution" value="3.90 A"/>
    <property type="chains" value="V=1-94"/>
</dbReference>
<dbReference type="PDB" id="6GXO">
    <property type="method" value="EM"/>
    <property type="resolution" value="3.90 A"/>
    <property type="chains" value="V=1-94"/>
</dbReference>
<dbReference type="PDB" id="6GXP">
    <property type="method" value="EM"/>
    <property type="resolution" value="4.40 A"/>
    <property type="chains" value="V=1-94"/>
</dbReference>
<dbReference type="PDB" id="6H4N">
    <property type="method" value="EM"/>
    <property type="resolution" value="3.00 A"/>
    <property type="chains" value="V=1-94"/>
</dbReference>
<dbReference type="PDB" id="6H58">
    <property type="method" value="EM"/>
    <property type="resolution" value="7.90 A"/>
    <property type="chains" value="V/VV=1-94"/>
</dbReference>
<dbReference type="PDB" id="6HRM">
    <property type="method" value="EM"/>
    <property type="resolution" value="2.96 A"/>
    <property type="chains" value="V=1-94"/>
</dbReference>
<dbReference type="PDB" id="6I0Y">
    <property type="method" value="EM"/>
    <property type="resolution" value="3.20 A"/>
    <property type="chains" value="8=1-94"/>
</dbReference>
<dbReference type="PDB" id="6I7V">
    <property type="method" value="X-ray"/>
    <property type="resolution" value="2.90 A"/>
    <property type="chains" value="CW/DW=1-94"/>
</dbReference>
<dbReference type="PDB" id="6O9J">
    <property type="method" value="EM"/>
    <property type="resolution" value="3.90 A"/>
    <property type="chains" value="V=1-94"/>
</dbReference>
<dbReference type="PDB" id="6O9K">
    <property type="method" value="EM"/>
    <property type="resolution" value="4.00 A"/>
    <property type="chains" value="V=1-94"/>
</dbReference>
<dbReference type="PDB" id="6OFX">
    <property type="method" value="EM"/>
    <property type="resolution" value="3.30 A"/>
    <property type="chains" value="v=1-94"/>
</dbReference>
<dbReference type="PDB" id="6OG7">
    <property type="method" value="EM"/>
    <property type="resolution" value="3.30 A"/>
    <property type="chains" value="v=1-94"/>
</dbReference>
<dbReference type="PDB" id="6OGF">
    <property type="method" value="EM"/>
    <property type="resolution" value="3.90 A"/>
    <property type="chains" value="v=1-94"/>
</dbReference>
<dbReference type="PDB" id="6OGG">
    <property type="method" value="EM"/>
    <property type="resolution" value="4.20 A"/>
    <property type="chains" value="v=1-94"/>
</dbReference>
<dbReference type="PDB" id="6OGI">
    <property type="method" value="EM"/>
    <property type="resolution" value="3.40 A"/>
    <property type="chains" value="v=1-94"/>
</dbReference>
<dbReference type="PDB" id="6OM6">
    <property type="method" value="EM"/>
    <property type="resolution" value="3.10 A"/>
    <property type="chains" value="V=1-94"/>
</dbReference>
<dbReference type="PDB" id="6ORE">
    <property type="method" value="EM"/>
    <property type="resolution" value="2.90 A"/>
    <property type="chains" value="V=1-94"/>
</dbReference>
<dbReference type="PDB" id="6ORL">
    <property type="method" value="EM"/>
    <property type="resolution" value="3.50 A"/>
    <property type="chains" value="V=1-94"/>
</dbReference>
<dbReference type="PDB" id="6OSK">
    <property type="method" value="EM"/>
    <property type="resolution" value="3.60 A"/>
    <property type="chains" value="V=1-94"/>
</dbReference>
<dbReference type="PDB" id="6OSQ">
    <property type="method" value="EM"/>
    <property type="resolution" value="3.50 A"/>
    <property type="chains" value="V=1-94"/>
</dbReference>
<dbReference type="PDB" id="6OST">
    <property type="method" value="EM"/>
    <property type="resolution" value="4.20 A"/>
    <property type="chains" value="V=1-94"/>
</dbReference>
<dbReference type="PDB" id="6OT3">
    <property type="method" value="EM"/>
    <property type="resolution" value="3.90 A"/>
    <property type="chains" value="V=1-94"/>
</dbReference>
<dbReference type="PDB" id="6OUO">
    <property type="method" value="EM"/>
    <property type="resolution" value="3.70 A"/>
    <property type="chains" value="V=1-94"/>
</dbReference>
<dbReference type="PDB" id="6PJ6">
    <property type="method" value="EM"/>
    <property type="resolution" value="2.20 A"/>
    <property type="chains" value="d=1-94"/>
</dbReference>
<dbReference type="PDB" id="6Q97">
    <property type="method" value="EM"/>
    <property type="resolution" value="3.90 A"/>
    <property type="chains" value="V=1-94"/>
</dbReference>
<dbReference type="PDB" id="6Q98">
    <property type="method" value="EM"/>
    <property type="resolution" value="4.30 A"/>
    <property type="chains" value="V=1-94"/>
</dbReference>
<dbReference type="PDB" id="6Q9A">
    <property type="method" value="EM"/>
    <property type="resolution" value="3.70 A"/>
    <property type="chains" value="V=1-93"/>
</dbReference>
<dbReference type="PDB" id="6QDW">
    <property type="method" value="EM"/>
    <property type="resolution" value="2.83 A"/>
    <property type="chains" value="w=1-94"/>
</dbReference>
<dbReference type="PDB" id="6QUL">
    <property type="method" value="EM"/>
    <property type="resolution" value="3.00 A"/>
    <property type="chains" value="W=1-94"/>
</dbReference>
<dbReference type="PDB" id="6S0K">
    <property type="method" value="EM"/>
    <property type="resolution" value="3.10 A"/>
    <property type="chains" value="W=1-94"/>
</dbReference>
<dbReference type="PDB" id="6SZS">
    <property type="method" value="EM"/>
    <property type="resolution" value="3.06 A"/>
    <property type="chains" value="V=1-94"/>
</dbReference>
<dbReference type="PDB" id="6TBV">
    <property type="method" value="EM"/>
    <property type="resolution" value="2.70 A"/>
    <property type="chains" value="L251=1-94"/>
</dbReference>
<dbReference type="PDB" id="6TC3">
    <property type="method" value="EM"/>
    <property type="resolution" value="2.70 A"/>
    <property type="chains" value="L251=1-94"/>
</dbReference>
<dbReference type="PDB" id="6U48">
    <property type="method" value="EM"/>
    <property type="resolution" value="2.87 A"/>
    <property type="chains" value="CW=1-94"/>
</dbReference>
<dbReference type="PDB" id="6VU3">
    <property type="method" value="EM"/>
    <property type="resolution" value="3.70 A"/>
    <property type="chains" value="4=1-94"/>
</dbReference>
<dbReference type="PDB" id="6VWL">
    <property type="method" value="EM"/>
    <property type="resolution" value="3.10 A"/>
    <property type="chains" value="T=1-94"/>
</dbReference>
<dbReference type="PDB" id="6VWM">
    <property type="method" value="EM"/>
    <property type="resolution" value="3.40 A"/>
    <property type="chains" value="T=1-94"/>
</dbReference>
<dbReference type="PDB" id="6VWN">
    <property type="method" value="EM"/>
    <property type="resolution" value="3.40 A"/>
    <property type="chains" value="T=1-94"/>
</dbReference>
<dbReference type="PDB" id="6VYQ">
    <property type="method" value="EM"/>
    <property type="resolution" value="3.70 A"/>
    <property type="chains" value="4=1-94"/>
</dbReference>
<dbReference type="PDB" id="6VYR">
    <property type="method" value="EM"/>
    <property type="resolution" value="3.80 A"/>
    <property type="chains" value="4=1-94"/>
</dbReference>
<dbReference type="PDB" id="6VYS">
    <property type="method" value="EM"/>
    <property type="resolution" value="3.70 A"/>
    <property type="chains" value="4=1-94"/>
</dbReference>
<dbReference type="PDB" id="6VYT">
    <property type="method" value="EM"/>
    <property type="resolution" value="14.00 A"/>
    <property type="chains" value="4=1-94"/>
</dbReference>
<dbReference type="PDB" id="6VYU">
    <property type="method" value="EM"/>
    <property type="resolution" value="7.00 A"/>
    <property type="chains" value="4=1-94"/>
</dbReference>
<dbReference type="PDB" id="6VYW">
    <property type="method" value="EM"/>
    <property type="resolution" value="7.00 A"/>
    <property type="chains" value="4=1-94"/>
</dbReference>
<dbReference type="PDB" id="6VYX">
    <property type="method" value="EM"/>
    <property type="resolution" value="9.90 A"/>
    <property type="chains" value="4=1-94"/>
</dbReference>
<dbReference type="PDB" id="6VYY">
    <property type="method" value="EM"/>
    <property type="resolution" value="9.90 A"/>
    <property type="chains" value="4=1-94"/>
</dbReference>
<dbReference type="PDB" id="6VYZ">
    <property type="method" value="EM"/>
    <property type="resolution" value="9.90 A"/>
    <property type="chains" value="4=1-94"/>
</dbReference>
<dbReference type="PDB" id="6VZ2">
    <property type="method" value="EM"/>
    <property type="resolution" value="10.00 A"/>
    <property type="chains" value="4=1-94"/>
</dbReference>
<dbReference type="PDB" id="6VZ3">
    <property type="method" value="EM"/>
    <property type="resolution" value="8.90 A"/>
    <property type="chains" value="4=1-94"/>
</dbReference>
<dbReference type="PDB" id="6VZ5">
    <property type="method" value="EM"/>
    <property type="resolution" value="8.90 A"/>
    <property type="chains" value="4=1-94"/>
</dbReference>
<dbReference type="PDB" id="6VZ7">
    <property type="method" value="EM"/>
    <property type="resolution" value="7.00 A"/>
    <property type="chains" value="4=1-94"/>
</dbReference>
<dbReference type="PDB" id="6VZJ">
    <property type="method" value="EM"/>
    <property type="resolution" value="4.10 A"/>
    <property type="chains" value="4=1-94"/>
</dbReference>
<dbReference type="PDB" id="6WD0">
    <property type="method" value="EM"/>
    <property type="resolution" value="3.00 A"/>
    <property type="chains" value="v=1-94"/>
</dbReference>
<dbReference type="PDB" id="6WD1">
    <property type="method" value="EM"/>
    <property type="resolution" value="3.30 A"/>
    <property type="chains" value="v=1-94"/>
</dbReference>
<dbReference type="PDB" id="6WD2">
    <property type="method" value="EM"/>
    <property type="resolution" value="3.60 A"/>
    <property type="chains" value="v=1-94"/>
</dbReference>
<dbReference type="PDB" id="6WD3">
    <property type="method" value="EM"/>
    <property type="resolution" value="3.60 A"/>
    <property type="chains" value="v=1-94"/>
</dbReference>
<dbReference type="PDB" id="6WD4">
    <property type="method" value="EM"/>
    <property type="resolution" value="3.70 A"/>
    <property type="chains" value="v=1-94"/>
</dbReference>
<dbReference type="PDB" id="6WD5">
    <property type="method" value="EM"/>
    <property type="resolution" value="3.60 A"/>
    <property type="chains" value="v=1-94"/>
</dbReference>
<dbReference type="PDB" id="6WD6">
    <property type="method" value="EM"/>
    <property type="resolution" value="3.70 A"/>
    <property type="chains" value="v=1-94"/>
</dbReference>
<dbReference type="PDB" id="6WD7">
    <property type="method" value="EM"/>
    <property type="resolution" value="3.90 A"/>
    <property type="chains" value="v=1-94"/>
</dbReference>
<dbReference type="PDB" id="6WD8">
    <property type="method" value="EM"/>
    <property type="resolution" value="3.70 A"/>
    <property type="chains" value="v=1-94"/>
</dbReference>
<dbReference type="PDB" id="6WD9">
    <property type="method" value="EM"/>
    <property type="resolution" value="3.70 A"/>
    <property type="chains" value="v=1-94"/>
</dbReference>
<dbReference type="PDB" id="6WDA">
    <property type="method" value="EM"/>
    <property type="resolution" value="3.80 A"/>
    <property type="chains" value="v=1-94"/>
</dbReference>
<dbReference type="PDB" id="6WDB">
    <property type="method" value="EM"/>
    <property type="resolution" value="4.00 A"/>
    <property type="chains" value="v=1-94"/>
</dbReference>
<dbReference type="PDB" id="6WDC">
    <property type="method" value="EM"/>
    <property type="resolution" value="4.20 A"/>
    <property type="chains" value="v=1-94"/>
</dbReference>
<dbReference type="PDB" id="6WDD">
    <property type="method" value="EM"/>
    <property type="resolution" value="3.20 A"/>
    <property type="chains" value="v=1-94"/>
</dbReference>
<dbReference type="PDB" id="6WDE">
    <property type="method" value="EM"/>
    <property type="resolution" value="3.00 A"/>
    <property type="chains" value="v=1-94"/>
</dbReference>
<dbReference type="PDB" id="6WDF">
    <property type="method" value="EM"/>
    <property type="resolution" value="3.30 A"/>
    <property type="chains" value="v=1-94"/>
</dbReference>
<dbReference type="PDB" id="6WDG">
    <property type="method" value="EM"/>
    <property type="resolution" value="3.30 A"/>
    <property type="chains" value="v=1-94"/>
</dbReference>
<dbReference type="PDB" id="6WDH">
    <property type="method" value="EM"/>
    <property type="resolution" value="4.30 A"/>
    <property type="chains" value="v=1-94"/>
</dbReference>
<dbReference type="PDB" id="6WDI">
    <property type="method" value="EM"/>
    <property type="resolution" value="4.00 A"/>
    <property type="chains" value="v=1-94"/>
</dbReference>
<dbReference type="PDB" id="6WDJ">
    <property type="method" value="EM"/>
    <property type="resolution" value="3.70 A"/>
    <property type="chains" value="v=1-94"/>
</dbReference>
<dbReference type="PDB" id="6WDK">
    <property type="method" value="EM"/>
    <property type="resolution" value="3.60 A"/>
    <property type="chains" value="v=1-94"/>
</dbReference>
<dbReference type="PDB" id="6WDL">
    <property type="method" value="EM"/>
    <property type="resolution" value="3.70 A"/>
    <property type="chains" value="v=1-94"/>
</dbReference>
<dbReference type="PDB" id="6WDM">
    <property type="method" value="EM"/>
    <property type="resolution" value="3.60 A"/>
    <property type="chains" value="v=1-94"/>
</dbReference>
<dbReference type="PDB" id="6WNT">
    <property type="method" value="EM"/>
    <property type="resolution" value="3.10 A"/>
    <property type="chains" value="v=1-94"/>
</dbReference>
<dbReference type="PDB" id="6WNV">
    <property type="method" value="EM"/>
    <property type="resolution" value="3.50 A"/>
    <property type="chains" value="v=1-94"/>
</dbReference>
<dbReference type="PDB" id="6WNW">
    <property type="method" value="EM"/>
    <property type="resolution" value="3.20 A"/>
    <property type="chains" value="v=1-94"/>
</dbReference>
<dbReference type="PDB" id="6X6T">
    <property type="method" value="EM"/>
    <property type="resolution" value="3.20 A"/>
    <property type="chains" value="4=1-94"/>
</dbReference>
<dbReference type="PDB" id="6X7F">
    <property type="method" value="EM"/>
    <property type="resolution" value="3.50 A"/>
    <property type="chains" value="4=1-94"/>
</dbReference>
<dbReference type="PDB" id="6X7K">
    <property type="method" value="EM"/>
    <property type="resolution" value="3.10 A"/>
    <property type="chains" value="4=1-94"/>
</dbReference>
<dbReference type="PDB" id="6X9Q">
    <property type="method" value="EM"/>
    <property type="resolution" value="4.80 A"/>
    <property type="chains" value="4=1-94"/>
</dbReference>
<dbReference type="PDB" id="6XDQ">
    <property type="method" value="EM"/>
    <property type="resolution" value="3.70 A"/>
    <property type="chains" value="4=1-94"/>
</dbReference>
<dbReference type="PDB" id="6XDR">
    <property type="method" value="EM"/>
    <property type="resolution" value="4.70 A"/>
    <property type="chains" value="4=1-94"/>
</dbReference>
<dbReference type="PDB" id="6XGF">
    <property type="method" value="EM"/>
    <property type="resolution" value="5.00 A"/>
    <property type="chains" value="4=1-94"/>
</dbReference>
<dbReference type="PDB" id="6XII">
    <property type="method" value="EM"/>
    <property type="resolution" value="7.00 A"/>
    <property type="chains" value="4=1-94"/>
</dbReference>
<dbReference type="PDB" id="6XIJ">
    <property type="method" value="EM"/>
    <property type="resolution" value="8.00 A"/>
    <property type="chains" value="4=1-94"/>
</dbReference>
<dbReference type="PDB" id="6XZ7">
    <property type="method" value="EM"/>
    <property type="resolution" value="2.10 A"/>
    <property type="chains" value="V=1-94"/>
</dbReference>
<dbReference type="PDB" id="6XZA">
    <property type="method" value="EM"/>
    <property type="resolution" value="2.66 A"/>
    <property type="chains" value="V2=1-94"/>
</dbReference>
<dbReference type="PDB" id="6XZB">
    <property type="method" value="EM"/>
    <property type="resolution" value="2.54 A"/>
    <property type="chains" value="V2=1-94"/>
</dbReference>
<dbReference type="PDB" id="6Y69">
    <property type="method" value="EM"/>
    <property type="resolution" value="2.86 A"/>
    <property type="chains" value="V=1-94"/>
</dbReference>
<dbReference type="PDB" id="6YS3">
    <property type="method" value="EM"/>
    <property type="resolution" value="2.58 A"/>
    <property type="chains" value="w=1-94"/>
</dbReference>
<dbReference type="PDB" id="6YSR">
    <property type="method" value="EM"/>
    <property type="resolution" value="3.10 A"/>
    <property type="chains" value="V=1-94"/>
</dbReference>
<dbReference type="PDB" id="6YSS">
    <property type="method" value="EM"/>
    <property type="resolution" value="2.60 A"/>
    <property type="chains" value="V=1-94"/>
</dbReference>
<dbReference type="PDB" id="6YST">
    <property type="method" value="EM"/>
    <property type="resolution" value="3.20 A"/>
    <property type="chains" value="V=1-94"/>
</dbReference>
<dbReference type="PDB" id="6YSU">
    <property type="method" value="EM"/>
    <property type="resolution" value="3.70 A"/>
    <property type="chains" value="V=1-94"/>
</dbReference>
<dbReference type="PDB" id="6ZTJ">
    <property type="method" value="EM"/>
    <property type="resolution" value="3.40 A"/>
    <property type="chains" value="BW=1-94"/>
</dbReference>
<dbReference type="PDB" id="6ZTL">
    <property type="method" value="EM"/>
    <property type="resolution" value="3.50 A"/>
    <property type="chains" value="BW=1-94"/>
</dbReference>
<dbReference type="PDB" id="6ZTM">
    <property type="method" value="EM"/>
    <property type="resolution" value="3.30 A"/>
    <property type="chains" value="BW=1-94"/>
</dbReference>
<dbReference type="PDB" id="6ZTN">
    <property type="method" value="EM"/>
    <property type="resolution" value="3.90 A"/>
    <property type="chains" value="BW=1-94"/>
</dbReference>
<dbReference type="PDB" id="6ZTO">
    <property type="method" value="EM"/>
    <property type="resolution" value="3.00 A"/>
    <property type="chains" value="BW=1-94"/>
</dbReference>
<dbReference type="PDB" id="6ZTP">
    <property type="method" value="EM"/>
    <property type="resolution" value="3.00 A"/>
    <property type="chains" value="BW=1-94"/>
</dbReference>
<dbReference type="PDB" id="6ZU1">
    <property type="method" value="EM"/>
    <property type="resolution" value="3.00 A"/>
    <property type="chains" value="BW=1-94"/>
</dbReference>
<dbReference type="PDB" id="7ABZ">
    <property type="method" value="EM"/>
    <property type="resolution" value="3.21 A"/>
    <property type="chains" value="V=1-94"/>
</dbReference>
<dbReference type="PDB" id="7AC7">
    <property type="method" value="EM"/>
    <property type="resolution" value="3.08 A"/>
    <property type="chains" value="V=1-94"/>
</dbReference>
<dbReference type="PDB" id="7ACJ">
    <property type="method" value="EM"/>
    <property type="resolution" value="3.20 A"/>
    <property type="chains" value="V=1-94"/>
</dbReference>
<dbReference type="PDB" id="7ACR">
    <property type="method" value="EM"/>
    <property type="resolution" value="3.44 A"/>
    <property type="chains" value="V=1-94"/>
</dbReference>
<dbReference type="PDB" id="7B5K">
    <property type="method" value="EM"/>
    <property type="resolution" value="2.90 A"/>
    <property type="chains" value="V=1-94"/>
</dbReference>
<dbReference type="PDB" id="7BL2">
    <property type="method" value="EM"/>
    <property type="resolution" value="3.70 A"/>
    <property type="chains" value="V=1-94"/>
</dbReference>
<dbReference type="PDB" id="7BL3">
    <property type="method" value="EM"/>
    <property type="resolution" value="3.50 A"/>
    <property type="chains" value="V=1-94"/>
</dbReference>
<dbReference type="PDB" id="7BL4">
    <property type="method" value="EM"/>
    <property type="resolution" value="2.40 A"/>
    <property type="chains" value="V=1-94"/>
</dbReference>
<dbReference type="PDB" id="7BL5">
    <property type="method" value="EM"/>
    <property type="resolution" value="3.30 A"/>
    <property type="chains" value="V=1-94"/>
</dbReference>
<dbReference type="PDB" id="7BL6">
    <property type="method" value="EM"/>
    <property type="resolution" value="4.00 A"/>
    <property type="chains" value="V=1-94"/>
</dbReference>
<dbReference type="PDB" id="7BV8">
    <property type="method" value="EM"/>
    <property type="resolution" value="3.14 A"/>
    <property type="chains" value="W=1-94"/>
</dbReference>
<dbReference type="PDB" id="7D6Z">
    <property type="method" value="EM"/>
    <property type="resolution" value="3.40 A"/>
    <property type="chains" value="V=1-94"/>
</dbReference>
<dbReference type="PDB" id="7D80">
    <property type="method" value="EM"/>
    <property type="resolution" value="4.10 A"/>
    <property type="chains" value="t=1-94"/>
</dbReference>
<dbReference type="PDB" id="7JSS">
    <property type="method" value="EM"/>
    <property type="resolution" value="3.70 A"/>
    <property type="chains" value="v=1-94"/>
</dbReference>
<dbReference type="PDB" id="7JSW">
    <property type="method" value="EM"/>
    <property type="resolution" value="3.80 A"/>
    <property type="chains" value="v=1-94"/>
</dbReference>
<dbReference type="PDB" id="7JSZ">
    <property type="method" value="EM"/>
    <property type="resolution" value="3.70 A"/>
    <property type="chains" value="v=1-94"/>
</dbReference>
<dbReference type="PDB" id="7JT1">
    <property type="method" value="EM"/>
    <property type="resolution" value="3.30 A"/>
    <property type="chains" value="v=1-94"/>
</dbReference>
<dbReference type="PDB" id="7JT2">
    <property type="method" value="EM"/>
    <property type="resolution" value="3.50 A"/>
    <property type="chains" value="v=1-94"/>
</dbReference>
<dbReference type="PDB" id="7JT3">
    <property type="method" value="EM"/>
    <property type="resolution" value="3.70 A"/>
    <property type="chains" value="v=1-94"/>
</dbReference>
<dbReference type="PDB" id="7K00">
    <property type="method" value="EM"/>
    <property type="resolution" value="1.98 A"/>
    <property type="chains" value="u=1-94"/>
</dbReference>
<dbReference type="PDB" id="7K50">
    <property type="method" value="EM"/>
    <property type="resolution" value="3.40 A"/>
    <property type="chains" value="v=1-94"/>
</dbReference>
<dbReference type="PDB" id="7K51">
    <property type="method" value="EM"/>
    <property type="resolution" value="3.50 A"/>
    <property type="chains" value="v=1-94"/>
</dbReference>
<dbReference type="PDB" id="7K52">
    <property type="method" value="EM"/>
    <property type="resolution" value="3.40 A"/>
    <property type="chains" value="v=1-94"/>
</dbReference>
<dbReference type="PDB" id="7K53">
    <property type="method" value="EM"/>
    <property type="resolution" value="3.20 A"/>
    <property type="chains" value="v=1-94"/>
</dbReference>
<dbReference type="PDB" id="7K54">
    <property type="method" value="EM"/>
    <property type="resolution" value="3.20 A"/>
    <property type="chains" value="v=1-94"/>
</dbReference>
<dbReference type="PDB" id="7K55">
    <property type="method" value="EM"/>
    <property type="resolution" value="3.30 A"/>
    <property type="chains" value="v=1-94"/>
</dbReference>
<dbReference type="PDB" id="7LV0">
    <property type="method" value="EM"/>
    <property type="resolution" value="3.20 A"/>
    <property type="chains" value="v=1-94"/>
</dbReference>
<dbReference type="PDB" id="7LVK">
    <property type="method" value="EM"/>
    <property type="resolution" value="2.20 A"/>
    <property type="chains" value="d=1-94"/>
</dbReference>
<dbReference type="PDB" id="7M5D">
    <property type="method" value="EM"/>
    <property type="resolution" value="2.80 A"/>
    <property type="chains" value="V=1-94"/>
</dbReference>
<dbReference type="PDB" id="7N1P">
    <property type="method" value="EM"/>
    <property type="resolution" value="2.33 A"/>
    <property type="chains" value="LY=1-94"/>
</dbReference>
<dbReference type="PDB" id="7N2C">
    <property type="method" value="EM"/>
    <property type="resolution" value="2.72 A"/>
    <property type="chains" value="LY=1-94"/>
</dbReference>
<dbReference type="PDB" id="7N2U">
    <property type="method" value="EM"/>
    <property type="resolution" value="2.53 A"/>
    <property type="chains" value="LY=1-94"/>
</dbReference>
<dbReference type="PDB" id="7N2V">
    <property type="method" value="EM"/>
    <property type="resolution" value="2.54 A"/>
    <property type="chains" value="LY=1-94"/>
</dbReference>
<dbReference type="PDB" id="7N30">
    <property type="method" value="EM"/>
    <property type="resolution" value="2.66 A"/>
    <property type="chains" value="LY=1-94"/>
</dbReference>
<dbReference type="PDB" id="7N31">
    <property type="method" value="EM"/>
    <property type="resolution" value="2.69 A"/>
    <property type="chains" value="LY=1-94"/>
</dbReference>
<dbReference type="PDB" id="7NBU">
    <property type="method" value="EM"/>
    <property type="resolution" value="3.11 A"/>
    <property type="chains" value="u=1-94"/>
</dbReference>
<dbReference type="PDB" id="7NSO">
    <property type="method" value="EM"/>
    <property type="resolution" value="2.90 A"/>
    <property type="chains" value="V=1-94"/>
</dbReference>
<dbReference type="PDB" id="7NSP">
    <property type="method" value="EM"/>
    <property type="resolution" value="3.50 A"/>
    <property type="chains" value="V=1-94"/>
</dbReference>
<dbReference type="PDB" id="7NSQ">
    <property type="method" value="EM"/>
    <property type="resolution" value="3.10 A"/>
    <property type="chains" value="V=1-94"/>
</dbReference>
<dbReference type="PDB" id="7NWT">
    <property type="method" value="EM"/>
    <property type="resolution" value="2.66 A"/>
    <property type="chains" value="V=1-94"/>
</dbReference>
<dbReference type="PDB" id="7NWW">
    <property type="method" value="EM"/>
    <property type="resolution" value="3.05 A"/>
    <property type="chains" value="U=1-94"/>
</dbReference>
<dbReference type="PDB" id="7O19">
    <property type="method" value="EM"/>
    <property type="resolution" value="2.90 A"/>
    <property type="chains" value="BV=1-94"/>
</dbReference>
<dbReference type="PDB" id="7O1A">
    <property type="method" value="EM"/>
    <property type="resolution" value="2.40 A"/>
    <property type="chains" value="BV=1-94"/>
</dbReference>
<dbReference type="PDB" id="7O1C">
    <property type="method" value="EM"/>
    <property type="resolution" value="2.60 A"/>
    <property type="chains" value="BV=1-94"/>
</dbReference>
<dbReference type="PDB" id="7OIF">
    <property type="method" value="EM"/>
    <property type="resolution" value="3.00 A"/>
    <property type="chains" value="U=1-94"/>
</dbReference>
<dbReference type="PDB" id="7OIG">
    <property type="method" value="EM"/>
    <property type="resolution" value="3.20 A"/>
    <property type="chains" value="U=1-94"/>
</dbReference>
<dbReference type="PDB" id="7OII">
    <property type="method" value="EM"/>
    <property type="resolution" value="3.00 A"/>
    <property type="chains" value="U=1-94"/>
</dbReference>
<dbReference type="PDB" id="7OIZ">
    <property type="method" value="EM"/>
    <property type="resolution" value="2.90 A"/>
    <property type="chains" value="u=1-94"/>
</dbReference>
<dbReference type="PDB" id="7OJ0">
    <property type="method" value="EM"/>
    <property type="resolution" value="3.50 A"/>
    <property type="chains" value="u=1-94"/>
</dbReference>
<dbReference type="PDB" id="7OT5">
    <property type="method" value="EM"/>
    <property type="resolution" value="2.90 A"/>
    <property type="chains" value="U=1-94"/>
</dbReference>
<dbReference type="PDB" id="7P3K">
    <property type="method" value="EM"/>
    <property type="resolution" value="2.90 A"/>
    <property type="chains" value="u=1-94"/>
</dbReference>
<dbReference type="PDB" id="7PJS">
    <property type="method" value="EM"/>
    <property type="resolution" value="2.35 A"/>
    <property type="chains" value="V=1-94"/>
</dbReference>
<dbReference type="PDB" id="7PJT">
    <property type="method" value="EM"/>
    <property type="resolution" value="6.00 A"/>
    <property type="chains" value="V=1-94"/>
</dbReference>
<dbReference type="PDB" id="7PJU">
    <property type="method" value="EM"/>
    <property type="resolution" value="9.50 A"/>
    <property type="chains" value="V=1-94"/>
</dbReference>
<dbReference type="PDB" id="7PJV">
    <property type="method" value="EM"/>
    <property type="resolution" value="3.10 A"/>
    <property type="chains" value="V=1-94"/>
</dbReference>
<dbReference type="PDB" id="7PJW">
    <property type="method" value="EM"/>
    <property type="resolution" value="4.00 A"/>
    <property type="chains" value="V=1-94"/>
</dbReference>
<dbReference type="PDB" id="7PJX">
    <property type="method" value="EM"/>
    <property type="resolution" value="6.50 A"/>
    <property type="chains" value="V=1-94"/>
</dbReference>
<dbReference type="PDB" id="7PJY">
    <property type="method" value="EM"/>
    <property type="resolution" value="3.10 A"/>
    <property type="chains" value="V=1-94"/>
</dbReference>
<dbReference type="PDB" id="7PJZ">
    <property type="method" value="EM"/>
    <property type="resolution" value="6.00 A"/>
    <property type="chains" value="V=1-94"/>
</dbReference>
<dbReference type="PDB" id="7Q4K">
    <property type="method" value="EM"/>
    <property type="resolution" value="3.00 A"/>
    <property type="chains" value="BV=1-94"/>
</dbReference>
<dbReference type="PDB" id="7QG8">
    <property type="method" value="EM"/>
    <property type="resolution" value="3.97 A"/>
    <property type="chains" value="i=1-94"/>
</dbReference>
<dbReference type="PDB" id="7QGH">
    <property type="method" value="EM"/>
    <property type="resolution" value="4.48 A"/>
    <property type="chains" value="i=1-94"/>
</dbReference>
<dbReference type="PDB" id="7QGN">
    <property type="method" value="EM"/>
    <property type="resolution" value="3.37 A"/>
    <property type="chains" value="i=1-94"/>
</dbReference>
<dbReference type="PDB" id="7QGR">
    <property type="method" value="EM"/>
    <property type="resolution" value="5.70 A"/>
    <property type="chains" value="i=1-94"/>
</dbReference>
<dbReference type="PDB" id="7QQ3">
    <property type="method" value="EM"/>
    <property type="resolution" value="2.10 A"/>
    <property type="chains" value="d=1-94"/>
</dbReference>
<dbReference type="PDB" id="7S1G">
    <property type="method" value="EM"/>
    <property type="resolution" value="2.48 A"/>
    <property type="chains" value="d=1-94"/>
</dbReference>
<dbReference type="PDB" id="7S1H">
    <property type="method" value="EM"/>
    <property type="resolution" value="2.35 A"/>
    <property type="chains" value="d=1-94"/>
</dbReference>
<dbReference type="PDB" id="7S1I">
    <property type="method" value="EM"/>
    <property type="resolution" value="2.48 A"/>
    <property type="chains" value="d=1-94"/>
</dbReference>
<dbReference type="PDB" id="7S1J">
    <property type="method" value="EM"/>
    <property type="resolution" value="2.47 A"/>
    <property type="chains" value="d=1-94"/>
</dbReference>
<dbReference type="PDB" id="7S1K">
    <property type="method" value="EM"/>
    <property type="resolution" value="2.42 A"/>
    <property type="chains" value="d=1-94"/>
</dbReference>
<dbReference type="PDB" id="7SA4">
    <property type="method" value="EM"/>
    <property type="resolution" value="2.55 A"/>
    <property type="chains" value="V=1-94"/>
</dbReference>
<dbReference type="PDB" id="7SS9">
    <property type="method" value="EM"/>
    <property type="resolution" value="3.90 A"/>
    <property type="chains" value="v=1-94"/>
</dbReference>
<dbReference type="PDB" id="7SSD">
    <property type="method" value="EM"/>
    <property type="resolution" value="3.30 A"/>
    <property type="chains" value="v=1-94"/>
</dbReference>
<dbReference type="PDB" id="7SSL">
    <property type="method" value="EM"/>
    <property type="resolution" value="3.80 A"/>
    <property type="chains" value="v=1-94"/>
</dbReference>
<dbReference type="PDB" id="7SSN">
    <property type="method" value="EM"/>
    <property type="resolution" value="3.20 A"/>
    <property type="chains" value="v=1-94"/>
</dbReference>
<dbReference type="PDB" id="7SSO">
    <property type="method" value="EM"/>
    <property type="resolution" value="3.20 A"/>
    <property type="chains" value="v=1-94"/>
</dbReference>
<dbReference type="PDB" id="7SSW">
    <property type="method" value="EM"/>
    <property type="resolution" value="3.80 A"/>
    <property type="chains" value="v=1-94"/>
</dbReference>
<dbReference type="PDB" id="7ST2">
    <property type="method" value="EM"/>
    <property type="resolution" value="2.90 A"/>
    <property type="chains" value="v=1-94"/>
</dbReference>
<dbReference type="PDB" id="7ST6">
    <property type="method" value="EM"/>
    <property type="resolution" value="3.00 A"/>
    <property type="chains" value="v=1-94"/>
</dbReference>
<dbReference type="PDB" id="7ST7">
    <property type="method" value="EM"/>
    <property type="resolution" value="3.20 A"/>
    <property type="chains" value="v=1-94"/>
</dbReference>
<dbReference type="PDB" id="7TOS">
    <property type="method" value="EM"/>
    <property type="resolution" value="2.90 A"/>
    <property type="chains" value="L25=1-94"/>
</dbReference>
<dbReference type="PDB" id="7UG7">
    <property type="method" value="EM"/>
    <property type="resolution" value="2.58 A"/>
    <property type="chains" value="LY=1-94"/>
</dbReference>
<dbReference type="PDB" id="7UPH">
    <property type="method" value="EM"/>
    <property type="resolution" value="4.18 A"/>
    <property type="chains" value="u=1-94"/>
</dbReference>
<dbReference type="PDB" id="7Y7C">
    <property type="method" value="EM"/>
    <property type="resolution" value="2.51 A"/>
    <property type="chains" value="u=1-94"/>
</dbReference>
<dbReference type="PDB" id="7Y7D">
    <property type="method" value="EM"/>
    <property type="resolution" value="2.58 A"/>
    <property type="chains" value="u=1-94"/>
</dbReference>
<dbReference type="PDB" id="7Y7E">
    <property type="method" value="EM"/>
    <property type="resolution" value="2.41 A"/>
    <property type="chains" value="u=1-94"/>
</dbReference>
<dbReference type="PDB" id="7Y7F">
    <property type="method" value="EM"/>
    <property type="resolution" value="2.43 A"/>
    <property type="chains" value="u=1-94"/>
</dbReference>
<dbReference type="PDB" id="7Y7G">
    <property type="method" value="EM"/>
    <property type="resolution" value="2.34 A"/>
    <property type="chains" value="u=1-94"/>
</dbReference>
<dbReference type="PDB" id="7Y7H">
    <property type="method" value="EM"/>
    <property type="resolution" value="2.51 A"/>
    <property type="chains" value="u=1-94"/>
</dbReference>
<dbReference type="PDB" id="7YLA">
    <property type="method" value="EM"/>
    <property type="resolution" value="2.52 A"/>
    <property type="chains" value="d=1-94"/>
</dbReference>
<dbReference type="PDB" id="7Z20">
    <property type="method" value="EM"/>
    <property type="resolution" value="2.29 A"/>
    <property type="chains" value="w=1-94"/>
</dbReference>
<dbReference type="PDB" id="7ZOD">
    <property type="method" value="EM"/>
    <property type="resolution" value="2.56 A"/>
    <property type="chains" value="w=1-94"/>
</dbReference>
<dbReference type="PDB" id="7ZP8">
    <property type="method" value="EM"/>
    <property type="resolution" value="2.20 A"/>
    <property type="chains" value="w=1-94"/>
</dbReference>
<dbReference type="PDB" id="7ZQ5">
    <property type="method" value="EM"/>
    <property type="resolution" value="2.70 A"/>
    <property type="chains" value="w=1-94"/>
</dbReference>
<dbReference type="PDB" id="7ZQ6">
    <property type="method" value="EM"/>
    <property type="resolution" value="2.75 A"/>
    <property type="chains" value="w=1-94"/>
</dbReference>
<dbReference type="PDB" id="7ZTA">
    <property type="method" value="EM"/>
    <property type="resolution" value="2.70 A"/>
    <property type="chains" value="L251=1-94"/>
</dbReference>
<dbReference type="PDB" id="8A3L">
    <property type="method" value="EM"/>
    <property type="resolution" value="3.42 A"/>
    <property type="chains" value="u=1-94"/>
</dbReference>
<dbReference type="PDB" id="8AKN">
    <property type="method" value="EM"/>
    <property type="resolution" value="2.30 A"/>
    <property type="chains" value="u=1-94"/>
</dbReference>
<dbReference type="PDB" id="8AM9">
    <property type="method" value="EM"/>
    <property type="resolution" value="2.80 A"/>
    <property type="chains" value="u=1-94"/>
</dbReference>
<dbReference type="PDB" id="8ANA">
    <property type="method" value="EM"/>
    <property type="resolution" value="2.00 A"/>
    <property type="chains" value="u=1-94"/>
</dbReference>
<dbReference type="PDB" id="8AP4">
    <property type="method" value="EM"/>
    <property type="resolution" value="3.00 A"/>
    <property type="chains" value="u=1-94"/>
</dbReference>
<dbReference type="PDB" id="8AYE">
    <property type="method" value="EM"/>
    <property type="resolution" value="1.96 A"/>
    <property type="chains" value="u=1-94"/>
</dbReference>
<dbReference type="PDB" id="8B0X">
    <property type="method" value="EM"/>
    <property type="resolution" value="1.55 A"/>
    <property type="chains" value="u=1-94"/>
</dbReference>
<dbReference type="PDB" id="8B7Y">
    <property type="method" value="EM"/>
    <property type="resolution" value="3.00 A"/>
    <property type="chains" value="d=1-94"/>
</dbReference>
<dbReference type="PDB" id="8BF7">
    <property type="method" value="EM"/>
    <property type="resolution" value="2.33 A"/>
    <property type="chains" value="S=1-94"/>
</dbReference>
<dbReference type="PDB" id="8BGE">
    <property type="method" value="EM"/>
    <property type="resolution" value="2.11 A"/>
    <property type="chains" value="S=1-94"/>
</dbReference>
<dbReference type="PDB" id="8BGH">
    <property type="method" value="EM"/>
    <property type="resolution" value="2.88 A"/>
    <property type="chains" value="S=1-94"/>
</dbReference>
<dbReference type="PDB" id="8BH4">
    <property type="method" value="EM"/>
    <property type="resolution" value="2.62 A"/>
    <property type="chains" value="S=1-94"/>
</dbReference>
<dbReference type="PDB" id="8BHJ">
    <property type="method" value="EM"/>
    <property type="resolution" value="2.81 A"/>
    <property type="chains" value="S=1-94"/>
</dbReference>
<dbReference type="PDB" id="8BHL">
    <property type="method" value="EM"/>
    <property type="resolution" value="2.21 A"/>
    <property type="chains" value="S=1-94"/>
</dbReference>
<dbReference type="PDB" id="8BHN">
    <property type="method" value="EM"/>
    <property type="resolution" value="2.85 A"/>
    <property type="chains" value="S=1-94"/>
</dbReference>
<dbReference type="PDB" id="8BHP">
    <property type="method" value="EM"/>
    <property type="resolution" value="2.37 A"/>
    <property type="chains" value="S=1-94"/>
</dbReference>
<dbReference type="PDB" id="8BIL">
    <property type="method" value="EM"/>
    <property type="resolution" value="2.04 A"/>
    <property type="chains" value="S=1-94"/>
</dbReference>
<dbReference type="PDB" id="8BIM">
    <property type="method" value="EM"/>
    <property type="resolution" value="2.04 A"/>
    <property type="chains" value="S=1-94"/>
</dbReference>
<dbReference type="PDB" id="8C8X">
    <property type="method" value="EM"/>
    <property type="resolution" value="3.93 A"/>
    <property type="chains" value="V=1-94"/>
</dbReference>
<dbReference type="PDB" id="8C8Y">
    <property type="method" value="EM"/>
    <property type="resolution" value="3.03 A"/>
    <property type="chains" value="V=1-94"/>
</dbReference>
<dbReference type="PDB" id="8C8Z">
    <property type="method" value="EM"/>
    <property type="resolution" value="3.12 A"/>
    <property type="chains" value="V=1-94"/>
</dbReference>
<dbReference type="PDB" id="8C90">
    <property type="method" value="EM"/>
    <property type="resolution" value="3.15 A"/>
    <property type="chains" value="V=1-94"/>
</dbReference>
<dbReference type="PDB" id="8C94">
    <property type="method" value="EM"/>
    <property type="resolution" value="3.80 A"/>
    <property type="chains" value="V=1-94"/>
</dbReference>
<dbReference type="PDB" id="8C95">
    <property type="method" value="EM"/>
    <property type="resolution" value="4.92 A"/>
    <property type="chains" value="V=1-94"/>
</dbReference>
<dbReference type="PDB" id="8CAM">
    <property type="method" value="EM"/>
    <property type="resolution" value="1.86 A"/>
    <property type="chains" value="u=1-94"/>
</dbReference>
<dbReference type="PDB" id="8CEU">
    <property type="method" value="EM"/>
    <property type="resolution" value="1.83 A"/>
    <property type="chains" value="u=1-94"/>
</dbReference>
<dbReference type="PDB" id="8CGD">
    <property type="method" value="EM"/>
    <property type="resolution" value="1.98 A"/>
    <property type="chains" value="u=1-94"/>
</dbReference>
<dbReference type="PDB" id="8CGK">
    <property type="method" value="EM"/>
    <property type="resolution" value="1.64 A"/>
    <property type="chains" value="u=1-94"/>
</dbReference>
<dbReference type="PDB" id="8CGV">
    <property type="method" value="EM"/>
    <property type="resolution" value="1.66 A"/>
    <property type="chains" value="u=1-94"/>
</dbReference>
<dbReference type="PDB" id="8EIU">
    <property type="method" value="EM"/>
    <property type="resolution" value="2.24 A"/>
    <property type="chains" value="u=1-94"/>
</dbReference>
<dbReference type="PDB" id="8EKC">
    <property type="method" value="EM"/>
    <property type="resolution" value="2.70 A"/>
    <property type="chains" value="X=1-94"/>
</dbReference>
<dbReference type="PDB" id="8EMM">
    <property type="method" value="EM"/>
    <property type="resolution" value="2.10 A"/>
    <property type="chains" value="u=1-94"/>
</dbReference>
<dbReference type="PDB" id="8FIZ">
    <property type="method" value="EM"/>
    <property type="resolution" value="3.80 A"/>
    <property type="chains" value="DC=1-94"/>
</dbReference>
<dbReference type="PDB" id="8FTO">
    <property type="method" value="EM"/>
    <property type="resolution" value="1.85 A"/>
    <property type="chains" value="u=1-94"/>
</dbReference>
<dbReference type="PDB" id="8FZD">
    <property type="method" value="EM"/>
    <property type="resolution" value="3.10 A"/>
    <property type="chains" value="X=1-94"/>
</dbReference>
<dbReference type="PDB" id="8FZE">
    <property type="method" value="EM"/>
    <property type="resolution" value="3.00 A"/>
    <property type="chains" value="X=1-94"/>
</dbReference>
<dbReference type="PDB" id="8FZF">
    <property type="method" value="EM"/>
    <property type="resolution" value="3.20 A"/>
    <property type="chains" value="X=1-94"/>
</dbReference>
<dbReference type="PDB" id="8FZG">
    <property type="method" value="EM"/>
    <property type="resolution" value="3.10 A"/>
    <property type="chains" value="X=1-94"/>
</dbReference>
<dbReference type="PDB" id="8FZH">
    <property type="method" value="EM"/>
    <property type="resolution" value="2.90 A"/>
    <property type="chains" value="X=1-94"/>
</dbReference>
<dbReference type="PDB" id="8FZI">
    <property type="method" value="EM"/>
    <property type="resolution" value="3.10 A"/>
    <property type="chains" value="X=1-94"/>
</dbReference>
<dbReference type="PDB" id="8FZJ">
    <property type="method" value="EM"/>
    <property type="resolution" value="3.00 A"/>
    <property type="chains" value="X=1-94"/>
</dbReference>
<dbReference type="PDB" id="8G2U">
    <property type="method" value="EM"/>
    <property type="resolution" value="3.00 A"/>
    <property type="chains" value="V=1-94"/>
</dbReference>
<dbReference type="PDB" id="8G31">
    <property type="method" value="EM"/>
    <property type="resolution" value="3.20 A"/>
    <property type="chains" value="V=1-94"/>
</dbReference>
<dbReference type="PDB" id="8G34">
    <property type="method" value="EM"/>
    <property type="resolution" value="3.20 A"/>
    <property type="chains" value="V=1-94"/>
</dbReference>
<dbReference type="PDB" id="8G38">
    <property type="method" value="EM"/>
    <property type="resolution" value="3.20 A"/>
    <property type="chains" value="V=1-94"/>
</dbReference>
<dbReference type="PDB" id="8G6W">
    <property type="method" value="EM"/>
    <property type="resolution" value="2.02 A"/>
    <property type="chains" value="u=1-94"/>
</dbReference>
<dbReference type="PDB" id="8G6X">
    <property type="method" value="EM"/>
    <property type="resolution" value="2.31 A"/>
    <property type="chains" value="u=1-94"/>
</dbReference>
<dbReference type="PDB" id="8G6Y">
    <property type="method" value="EM"/>
    <property type="resolution" value="2.09 A"/>
    <property type="chains" value="u=1-94"/>
</dbReference>
<dbReference type="PDB" id="8G7P">
    <property type="method" value="EM"/>
    <property type="resolution" value="2.90 A"/>
    <property type="chains" value="X=1-94"/>
</dbReference>
<dbReference type="PDB" id="8G7Q">
    <property type="method" value="EM"/>
    <property type="resolution" value="3.10 A"/>
    <property type="chains" value="X=1-94"/>
</dbReference>
<dbReference type="PDB" id="8G7R">
    <property type="method" value="EM"/>
    <property type="resolution" value="2.80 A"/>
    <property type="chains" value="X=1-94"/>
</dbReference>
<dbReference type="PDB" id="8G7S">
    <property type="method" value="EM"/>
    <property type="resolution" value="3.10 A"/>
    <property type="chains" value="X=1-94"/>
</dbReference>
<dbReference type="PDB" id="8HSP">
    <property type="method" value="EM"/>
    <property type="resolution" value="2.32 A"/>
    <property type="chains" value="u=1-94"/>
</dbReference>
<dbReference type="PDB" id="8HTZ">
    <property type="method" value="EM"/>
    <property type="resolution" value="2.40 A"/>
    <property type="chains" value="u=1-94"/>
</dbReference>
<dbReference type="PDB" id="8HU1">
    <property type="method" value="EM"/>
    <property type="resolution" value="2.69 A"/>
    <property type="chains" value="u=1-94"/>
</dbReference>
<dbReference type="PDB" id="8IFB">
    <property type="method" value="EM"/>
    <property type="resolution" value="2.43 A"/>
    <property type="chains" value="u=1-94"/>
</dbReference>
<dbReference type="PDB" id="8IFC">
    <property type="method" value="EM"/>
    <property type="resolution" value="2.90 A"/>
    <property type="chains" value="u=1-94"/>
</dbReference>
<dbReference type="PDB" id="8J1Z">
    <property type="method" value="EM"/>
    <property type="resolution" value="2.60 A"/>
    <property type="chains" value="u=1-94"/>
</dbReference>
<dbReference type="PDB" id="8P16">
    <property type="method" value="EM"/>
    <property type="resolution" value="2.77 A"/>
    <property type="chains" value="V=1-94"/>
</dbReference>
<dbReference type="PDB" id="8P17">
    <property type="method" value="EM"/>
    <property type="resolution" value="2.78 A"/>
    <property type="chains" value="V=1-94"/>
</dbReference>
<dbReference type="PDB" id="8P18">
    <property type="method" value="EM"/>
    <property type="resolution" value="2.77 A"/>
    <property type="chains" value="V=1-94"/>
</dbReference>
<dbReference type="PDB" id="8PEG">
    <property type="method" value="EM"/>
    <property type="resolution" value="3.30 A"/>
    <property type="chains" value="y=1-94"/>
</dbReference>
<dbReference type="PDB" id="8PHJ">
    <property type="method" value="EM"/>
    <property type="resolution" value="3.67 A"/>
    <property type="chains" value="u=1-94"/>
</dbReference>
<dbReference type="PDB" id="8PKL">
    <property type="method" value="EM"/>
    <property type="resolution" value="3.09 A"/>
    <property type="chains" value="y=1-94"/>
</dbReference>
<dbReference type="PDB" id="8PVA">
    <property type="method" value="EM"/>
    <property type="resolution" value="4.50 A"/>
    <property type="chains" value="u=1-94"/>
</dbReference>
<dbReference type="PDB" id="8Q4F">
    <property type="method" value="EM"/>
    <property type="resolution" value="3.10 A"/>
    <property type="chains" value="u=1-94"/>
</dbReference>
<dbReference type="PDB" id="8QBT">
    <property type="method" value="EM"/>
    <property type="resolution" value="2.20 A"/>
    <property type="chains" value="V=1-94"/>
</dbReference>
<dbReference type="PDB" id="8QK7">
    <property type="method" value="EM"/>
    <property type="resolution" value="2.77 A"/>
    <property type="chains" value="V=1-94"/>
</dbReference>
<dbReference type="PDB" id="8QOA">
    <property type="method" value="EM"/>
    <property type="resolution" value="2.00 A"/>
    <property type="chains" value="u=1-94"/>
</dbReference>
<dbReference type="PDB" id="8R6C">
    <property type="method" value="EM"/>
    <property type="resolution" value="2.20 A"/>
    <property type="chains" value="u=1-94"/>
</dbReference>
<dbReference type="PDB" id="8R8M">
    <property type="method" value="EM"/>
    <property type="resolution" value="2.40 A"/>
    <property type="chains" value="u=1-94"/>
</dbReference>
<dbReference type="PDB" id="8RPY">
    <property type="method" value="EM"/>
    <property type="resolution" value="2.64 A"/>
    <property type="chains" value="V=1-94"/>
</dbReference>
<dbReference type="PDB" id="8RPZ">
    <property type="method" value="EM"/>
    <property type="resolution" value="2.44 A"/>
    <property type="chains" value="V=1-94"/>
</dbReference>
<dbReference type="PDB" id="8RQ0">
    <property type="method" value="EM"/>
    <property type="resolution" value="2.44 A"/>
    <property type="chains" value="V=1-94"/>
</dbReference>
<dbReference type="PDB" id="8RQ2">
    <property type="method" value="EM"/>
    <property type="resolution" value="2.44 A"/>
    <property type="chains" value="V=1-94"/>
</dbReference>
<dbReference type="PDB" id="8SYL">
    <property type="method" value="EM"/>
    <property type="resolution" value="2.90 A"/>
    <property type="chains" value="X=1-94"/>
</dbReference>
<dbReference type="PDB" id="8T5D">
    <property type="method" value="EM"/>
    <property type="resolution" value="3.20 A"/>
    <property type="chains" value="V=1-94"/>
</dbReference>
<dbReference type="PDB" id="8T5H">
    <property type="method" value="EM"/>
    <property type="resolution" value="3.30 A"/>
    <property type="chains" value="V=1-94"/>
</dbReference>
<dbReference type="PDB" id="8UPO">
    <property type="method" value="EM"/>
    <property type="resolution" value="5.50 A"/>
    <property type="chains" value="4=1-94"/>
</dbReference>
<dbReference type="PDB" id="8UPR">
    <property type="method" value="EM"/>
    <property type="resolution" value="5.30 A"/>
    <property type="chains" value="4=1-94"/>
</dbReference>
<dbReference type="PDB" id="8UQL">
    <property type="method" value="EM"/>
    <property type="resolution" value="3.20 A"/>
    <property type="chains" value="4=1-94"/>
</dbReference>
<dbReference type="PDB" id="8UQM">
    <property type="method" value="EM"/>
    <property type="resolution" value="5.30 A"/>
    <property type="chains" value="4=1-94"/>
</dbReference>
<dbReference type="PDB" id="8UQP">
    <property type="method" value="EM"/>
    <property type="resolution" value="3.80 A"/>
    <property type="chains" value="4=1-94"/>
</dbReference>
<dbReference type="PDB" id="8UR0">
    <property type="method" value="EM"/>
    <property type="resolution" value="3.40 A"/>
    <property type="chains" value="4=1-94"/>
</dbReference>
<dbReference type="PDB" id="8URH">
    <property type="method" value="EM"/>
    <property type="resolution" value="5.70 A"/>
    <property type="chains" value="4=1-94"/>
</dbReference>
<dbReference type="PDB" id="8URI">
    <property type="method" value="EM"/>
    <property type="resolution" value="5.30 A"/>
    <property type="chains" value="4=1-94"/>
</dbReference>
<dbReference type="PDB" id="8URX">
    <property type="method" value="EM"/>
    <property type="resolution" value="6.60 A"/>
    <property type="chains" value="4=1-94"/>
</dbReference>
<dbReference type="PDB" id="8URY">
    <property type="method" value="EM"/>
    <property type="resolution" value="3.10 A"/>
    <property type="chains" value="4=1-94"/>
</dbReference>
<dbReference type="PDB" id="8VS9">
    <property type="method" value="EM"/>
    <property type="resolution" value="3.90 A"/>
    <property type="chains" value="L25=1-94"/>
</dbReference>
<dbReference type="PDB" id="8VSA">
    <property type="method" value="EM"/>
    <property type="resolution" value="3.70 A"/>
    <property type="chains" value="L25=1-94"/>
</dbReference>
<dbReference type="PDB" id="8W51">
    <property type="method" value="EM"/>
    <property type="resolution" value="2.40 A"/>
    <property type="chains" value="W=1-94"/>
</dbReference>
<dbReference type="PDB" id="8YUO">
    <property type="method" value="EM"/>
    <property type="resolution" value="2.25 A"/>
    <property type="chains" value="u=1-94"/>
</dbReference>
<dbReference type="PDB" id="8YUP">
    <property type="method" value="EM"/>
    <property type="resolution" value="2.39 A"/>
    <property type="chains" value="u=1-94"/>
</dbReference>
<dbReference type="PDB" id="8YUQ">
    <property type="method" value="EM"/>
    <property type="resolution" value="2.41 A"/>
    <property type="chains" value="u=1-94"/>
</dbReference>
<dbReference type="PDB" id="8YUR">
    <property type="method" value="EM"/>
    <property type="resolution" value="2.47 A"/>
    <property type="chains" value="u=1-94"/>
</dbReference>
<dbReference type="PDB" id="8YUS">
    <property type="method" value="EM"/>
    <property type="resolution" value="2.43 A"/>
    <property type="chains" value="u=1-94"/>
</dbReference>
<dbReference type="PDB" id="9AX7">
    <property type="method" value="EM"/>
    <property type="resolution" value="2.63 A"/>
    <property type="chains" value="u=1-94"/>
</dbReference>
<dbReference type="PDB" id="9CG5">
    <property type="method" value="EM"/>
    <property type="resolution" value="2.59 A"/>
    <property type="chains" value="u=1-94"/>
</dbReference>
<dbReference type="PDB" id="9CG6">
    <property type="method" value="EM"/>
    <property type="resolution" value="2.61 A"/>
    <property type="chains" value="u=1-94"/>
</dbReference>
<dbReference type="PDB" id="9CG7">
    <property type="method" value="EM"/>
    <property type="resolution" value="2.75 A"/>
    <property type="chains" value="u=1-94"/>
</dbReference>
<dbReference type="PDB" id="9D89">
    <property type="method" value="EM"/>
    <property type="resolution" value="1.95 A"/>
    <property type="chains" value="u=1-94"/>
</dbReference>
<dbReference type="PDB" id="9FBV">
    <property type="method" value="EM"/>
    <property type="resolution" value="2.40 A"/>
    <property type="chains" value="u=1-94"/>
</dbReference>
<dbReference type="PDB" id="9GFT">
    <property type="method" value="EM"/>
    <property type="resolution" value="3.10 A"/>
    <property type="chains" value="Aq/i=1-94"/>
</dbReference>
<dbReference type="PDB" id="9GGR">
    <property type="method" value="EM"/>
    <property type="resolution" value="3.20 A"/>
    <property type="chains" value="Aq/i=1-94"/>
</dbReference>
<dbReference type="PDB" id="9H3P">
    <property type="method" value="EM"/>
    <property type="resolution" value="7.06 A"/>
    <property type="chains" value="V=1-94"/>
</dbReference>
<dbReference type="PDB" id="9H3Q">
    <property type="method" value="EM"/>
    <property type="resolution" value="4.02 A"/>
    <property type="chains" value="V=1-94"/>
</dbReference>
<dbReference type="PDB" id="9H3R">
    <property type="method" value="EM"/>
    <property type="resolution" value="4.12 A"/>
    <property type="chains" value="V=1-94"/>
</dbReference>
<dbReference type="PDB" id="9H3S">
    <property type="method" value="EM"/>
    <property type="resolution" value="4.16 A"/>
    <property type="chains" value="V=1-94"/>
</dbReference>
<dbReference type="PDB" id="9H3V">
    <property type="method" value="EM"/>
    <property type="resolution" value="3.55 A"/>
    <property type="chains" value="V=1-94"/>
</dbReference>
<dbReference type="PDB" id="9H3W">
    <property type="method" value="EM"/>
    <property type="resolution" value="5.38 A"/>
    <property type="chains" value="V=1-94"/>
</dbReference>
<dbReference type="PDB" id="9H3X">
    <property type="method" value="EM"/>
    <property type="resolution" value="4.12 A"/>
    <property type="chains" value="V=1-94"/>
</dbReference>
<dbReference type="PDB" id="9H3Y">
    <property type="method" value="EM"/>
    <property type="resolution" value="3.09 A"/>
    <property type="chains" value="V=1-94"/>
</dbReference>
<dbReference type="PDB" id="9H3Z">
    <property type="method" value="EM"/>
    <property type="resolution" value="2.98 A"/>
    <property type="chains" value="V=1-94"/>
</dbReference>
<dbReference type="PDB" id="9HA4">
    <property type="method" value="EM"/>
    <property type="resolution" value="4.26 A"/>
    <property type="chains" value="V=1-94"/>
</dbReference>
<dbReference type="PDB" id="9HA6">
    <property type="method" value="EM"/>
    <property type="resolution" value="3.08 A"/>
    <property type="chains" value="V=1-94"/>
</dbReference>
<dbReference type="PDB" id="9HA7">
    <property type="method" value="EM"/>
    <property type="resolution" value="4.37 A"/>
    <property type="chains" value="V=1-94"/>
</dbReference>
<dbReference type="PDB" id="9MOR">
    <property type="method" value="EM"/>
    <property type="resolution" value="2.65 A"/>
    <property type="chains" value="V=1-94"/>
</dbReference>
<dbReference type="PDB" id="9MQ4">
    <property type="method" value="EM"/>
    <property type="resolution" value="2.78 A"/>
    <property type="chains" value="V=1-94"/>
</dbReference>
<dbReference type="PDBsum" id="1B75"/>
<dbReference type="PDBsum" id="1D6K"/>
<dbReference type="PDBsum" id="1DFU"/>
<dbReference type="PDBsum" id="1ML5"/>
<dbReference type="PDBsum" id="2J28"/>
<dbReference type="PDBsum" id="2RDO"/>
<dbReference type="PDBsum" id="3BBX"/>
<dbReference type="PDBsum" id="3J5L"/>
<dbReference type="PDBsum" id="3J7Z"/>
<dbReference type="PDBsum" id="3J8G"/>
<dbReference type="PDBsum" id="3J9Y"/>
<dbReference type="PDBsum" id="3J9Z"/>
<dbReference type="PDBsum" id="3JA1"/>
<dbReference type="PDBsum" id="3JBU"/>
<dbReference type="PDBsum" id="3JBV"/>
<dbReference type="PDBsum" id="3JCD"/>
<dbReference type="PDBsum" id="3JCE"/>
<dbReference type="PDBsum" id="3JCJ"/>
<dbReference type="PDBsum" id="3JCN"/>
<dbReference type="PDBsum" id="487D"/>
<dbReference type="PDBsum" id="4CSU"/>
<dbReference type="PDBsum" id="4U1U"/>
<dbReference type="PDBsum" id="4U1V"/>
<dbReference type="PDBsum" id="4U20"/>
<dbReference type="PDBsum" id="4U24"/>
<dbReference type="PDBsum" id="4U25"/>
<dbReference type="PDBsum" id="4U26"/>
<dbReference type="PDBsum" id="4U27"/>
<dbReference type="PDBsum" id="4UY8"/>
<dbReference type="PDBsum" id="4V42"/>
<dbReference type="PDBsum" id="4V47"/>
<dbReference type="PDBsum" id="4V48"/>
<dbReference type="PDBsum" id="4V4H"/>
<dbReference type="PDBsum" id="4V4Q"/>
<dbReference type="PDBsum" id="4V4V"/>
<dbReference type="PDBsum" id="4V4W"/>
<dbReference type="PDBsum" id="4V50"/>
<dbReference type="PDBsum" id="4V52"/>
<dbReference type="PDBsum" id="4V53"/>
<dbReference type="PDBsum" id="4V54"/>
<dbReference type="PDBsum" id="4V55"/>
<dbReference type="PDBsum" id="4V56"/>
<dbReference type="PDBsum" id="4V57"/>
<dbReference type="PDBsum" id="4V5B"/>
<dbReference type="PDBsum" id="4V5H"/>
<dbReference type="PDBsum" id="4V5Y"/>
<dbReference type="PDBsum" id="4V64"/>
<dbReference type="PDBsum" id="4V65"/>
<dbReference type="PDBsum" id="4V66"/>
<dbReference type="PDBsum" id="4V69"/>
<dbReference type="PDBsum" id="4V6C"/>
<dbReference type="PDBsum" id="4V6D"/>
<dbReference type="PDBsum" id="4V6E"/>
<dbReference type="PDBsum" id="4V6K"/>
<dbReference type="PDBsum" id="4V6L"/>
<dbReference type="PDBsum" id="4V6M"/>
<dbReference type="PDBsum" id="4V6N"/>
<dbReference type="PDBsum" id="4V6O"/>
<dbReference type="PDBsum" id="4V6P"/>
<dbReference type="PDBsum" id="4V6Q"/>
<dbReference type="PDBsum" id="4V6R"/>
<dbReference type="PDBsum" id="4V6S"/>
<dbReference type="PDBsum" id="4V6T"/>
<dbReference type="PDBsum" id="4V6V"/>
<dbReference type="PDBsum" id="4V6Y"/>
<dbReference type="PDBsum" id="4V6Z"/>
<dbReference type="PDBsum" id="4V70"/>
<dbReference type="PDBsum" id="4V71"/>
<dbReference type="PDBsum" id="4V72"/>
<dbReference type="PDBsum" id="4V73"/>
<dbReference type="PDBsum" id="4V74"/>
<dbReference type="PDBsum" id="4V75"/>
<dbReference type="PDBsum" id="4V76"/>
<dbReference type="PDBsum" id="4V77"/>
<dbReference type="PDBsum" id="4V78"/>
<dbReference type="PDBsum" id="4V79"/>
<dbReference type="PDBsum" id="4V7A"/>
<dbReference type="PDBsum" id="4V7B"/>
<dbReference type="PDBsum" id="4V7C"/>
<dbReference type="PDBsum" id="4V7D"/>
<dbReference type="PDBsum" id="4V7I"/>
<dbReference type="PDBsum" id="4V7S"/>
<dbReference type="PDBsum" id="4V7T"/>
<dbReference type="PDBsum" id="4V7U"/>
<dbReference type="PDBsum" id="4V7V"/>
<dbReference type="PDBsum" id="4V85"/>
<dbReference type="PDBsum" id="4V89"/>
<dbReference type="PDBsum" id="4V9C"/>
<dbReference type="PDBsum" id="4V9D"/>
<dbReference type="PDBsum" id="4V9O"/>
<dbReference type="PDBsum" id="4V9P"/>
<dbReference type="PDBsum" id="4WF1"/>
<dbReference type="PDBsum" id="4WOI"/>
<dbReference type="PDBsum" id="4WWW"/>
<dbReference type="PDBsum" id="4YBB"/>
<dbReference type="PDBsum" id="5ADY"/>
<dbReference type="PDBsum" id="5AFI"/>
<dbReference type="PDBsum" id="5AKA"/>
<dbReference type="PDBsum" id="5GAD"/>
<dbReference type="PDBsum" id="5GAE"/>
<dbReference type="PDBsum" id="5GAF"/>
<dbReference type="PDBsum" id="5GAG"/>
<dbReference type="PDBsum" id="5GAH"/>
<dbReference type="PDBsum" id="5H5U"/>
<dbReference type="PDBsum" id="5IQR"/>
<dbReference type="PDBsum" id="5IT8"/>
<dbReference type="PDBsum" id="5J5B"/>
<dbReference type="PDBsum" id="5J7L"/>
<dbReference type="PDBsum" id="5J88"/>
<dbReference type="PDBsum" id="5J8A"/>
<dbReference type="PDBsum" id="5J91"/>
<dbReference type="PDBsum" id="5JC9"/>
<dbReference type="PDBsum" id="5JTE"/>
<dbReference type="PDBsum" id="5JU8"/>
<dbReference type="PDBsum" id="5KCR"/>
<dbReference type="PDBsum" id="5KCS"/>
<dbReference type="PDBsum" id="5KPS"/>
<dbReference type="PDBsum" id="5KPV"/>
<dbReference type="PDBsum" id="5KPW"/>
<dbReference type="PDBsum" id="5KPX"/>
<dbReference type="PDBsum" id="5L3P"/>
<dbReference type="PDBsum" id="5LZA"/>
<dbReference type="PDBsum" id="5LZB"/>
<dbReference type="PDBsum" id="5LZC"/>
<dbReference type="PDBsum" id="5LZD"/>
<dbReference type="PDBsum" id="5LZE"/>
<dbReference type="PDBsum" id="5LZF"/>
<dbReference type="PDBsum" id="5MDV"/>
<dbReference type="PDBsum" id="5MDW"/>
<dbReference type="PDBsum" id="5MDY"/>
<dbReference type="PDBsum" id="5MDZ"/>
<dbReference type="PDBsum" id="5MGP"/>
<dbReference type="PDBsum" id="5NCO"/>
<dbReference type="PDBsum" id="5NP6"/>
<dbReference type="PDBsum" id="5NWY"/>
<dbReference type="PDBsum" id="5O2R"/>
<dbReference type="PDBsum" id="5U4I"/>
<dbReference type="PDBsum" id="5U9F"/>
<dbReference type="PDBsum" id="5U9G"/>
<dbReference type="PDBsum" id="5UYK"/>
<dbReference type="PDBsum" id="5UYL"/>
<dbReference type="PDBsum" id="5UYM"/>
<dbReference type="PDBsum" id="5UYN"/>
<dbReference type="PDBsum" id="5UYP"/>
<dbReference type="PDBsum" id="5UYQ"/>
<dbReference type="PDBsum" id="5WDT"/>
<dbReference type="PDBsum" id="5WE4"/>
<dbReference type="PDBsum" id="5WE6"/>
<dbReference type="PDBsum" id="5WF0"/>
<dbReference type="PDBsum" id="5WFK"/>
<dbReference type="PDBsum" id="5WFS"/>
<dbReference type="PDBsum" id="6BU8"/>
<dbReference type="PDBsum" id="6BY1"/>
<dbReference type="PDBsum" id="6C4I"/>
<dbReference type="PDBsum" id="6DNC"/>
<dbReference type="PDBsum" id="6ENF"/>
<dbReference type="PDBsum" id="6ENJ"/>
<dbReference type="PDBsum" id="6ENU"/>
<dbReference type="PDBsum" id="6GBZ"/>
<dbReference type="PDBsum" id="6GC0"/>
<dbReference type="PDBsum" id="6GC4"/>
<dbReference type="PDBsum" id="6GC8"/>
<dbReference type="PDBsum" id="6GWT"/>
<dbReference type="PDBsum" id="6GXM"/>
<dbReference type="PDBsum" id="6GXN"/>
<dbReference type="PDBsum" id="6GXO"/>
<dbReference type="PDBsum" id="6GXP"/>
<dbReference type="PDBsum" id="6H4N"/>
<dbReference type="PDBsum" id="6H58"/>
<dbReference type="PDBsum" id="6HRM"/>
<dbReference type="PDBsum" id="6I0Y"/>
<dbReference type="PDBsum" id="6I7V"/>
<dbReference type="PDBsum" id="6O9J"/>
<dbReference type="PDBsum" id="6O9K"/>
<dbReference type="PDBsum" id="6OFX"/>
<dbReference type="PDBsum" id="6OG7"/>
<dbReference type="PDBsum" id="6OGF"/>
<dbReference type="PDBsum" id="6OGG"/>
<dbReference type="PDBsum" id="6OGI"/>
<dbReference type="PDBsum" id="6OM6"/>
<dbReference type="PDBsum" id="6ORE"/>
<dbReference type="PDBsum" id="6ORL"/>
<dbReference type="PDBsum" id="6OSK"/>
<dbReference type="PDBsum" id="6OSQ"/>
<dbReference type="PDBsum" id="6OST"/>
<dbReference type="PDBsum" id="6OT3"/>
<dbReference type="PDBsum" id="6OUO"/>
<dbReference type="PDBsum" id="6PJ6"/>
<dbReference type="PDBsum" id="6Q97"/>
<dbReference type="PDBsum" id="6Q98"/>
<dbReference type="PDBsum" id="6Q9A"/>
<dbReference type="PDBsum" id="6QDW"/>
<dbReference type="PDBsum" id="6QUL"/>
<dbReference type="PDBsum" id="6S0K"/>
<dbReference type="PDBsum" id="6SZS"/>
<dbReference type="PDBsum" id="6TBV"/>
<dbReference type="PDBsum" id="6TC3"/>
<dbReference type="PDBsum" id="6U48"/>
<dbReference type="PDBsum" id="6VU3"/>
<dbReference type="PDBsum" id="6VWL"/>
<dbReference type="PDBsum" id="6VWM"/>
<dbReference type="PDBsum" id="6VWN"/>
<dbReference type="PDBsum" id="6VYQ"/>
<dbReference type="PDBsum" id="6VYR"/>
<dbReference type="PDBsum" id="6VYS"/>
<dbReference type="PDBsum" id="6VYT"/>
<dbReference type="PDBsum" id="6VYU"/>
<dbReference type="PDBsum" id="6VYW"/>
<dbReference type="PDBsum" id="6VYX"/>
<dbReference type="PDBsum" id="6VYY"/>
<dbReference type="PDBsum" id="6VYZ"/>
<dbReference type="PDBsum" id="6VZ2"/>
<dbReference type="PDBsum" id="6VZ3"/>
<dbReference type="PDBsum" id="6VZ5"/>
<dbReference type="PDBsum" id="6VZ7"/>
<dbReference type="PDBsum" id="6VZJ"/>
<dbReference type="PDBsum" id="6WD0"/>
<dbReference type="PDBsum" id="6WD1"/>
<dbReference type="PDBsum" id="6WD2"/>
<dbReference type="PDBsum" id="6WD3"/>
<dbReference type="PDBsum" id="6WD4"/>
<dbReference type="PDBsum" id="6WD5"/>
<dbReference type="PDBsum" id="6WD6"/>
<dbReference type="PDBsum" id="6WD7"/>
<dbReference type="PDBsum" id="6WD8"/>
<dbReference type="PDBsum" id="6WD9"/>
<dbReference type="PDBsum" id="6WDA"/>
<dbReference type="PDBsum" id="6WDB"/>
<dbReference type="PDBsum" id="6WDC"/>
<dbReference type="PDBsum" id="6WDD"/>
<dbReference type="PDBsum" id="6WDE"/>
<dbReference type="PDBsum" id="6WDF"/>
<dbReference type="PDBsum" id="6WDG"/>
<dbReference type="PDBsum" id="6WDH"/>
<dbReference type="PDBsum" id="6WDI"/>
<dbReference type="PDBsum" id="6WDJ"/>
<dbReference type="PDBsum" id="6WDK"/>
<dbReference type="PDBsum" id="6WDL"/>
<dbReference type="PDBsum" id="6WDM"/>
<dbReference type="PDBsum" id="6WNT"/>
<dbReference type="PDBsum" id="6WNV"/>
<dbReference type="PDBsum" id="6WNW"/>
<dbReference type="PDBsum" id="6X6T"/>
<dbReference type="PDBsum" id="6X7F"/>
<dbReference type="PDBsum" id="6X7K"/>
<dbReference type="PDBsum" id="6X9Q"/>
<dbReference type="PDBsum" id="6XDQ"/>
<dbReference type="PDBsum" id="6XDR"/>
<dbReference type="PDBsum" id="6XGF"/>
<dbReference type="PDBsum" id="6XII"/>
<dbReference type="PDBsum" id="6XIJ"/>
<dbReference type="PDBsum" id="6XZ7"/>
<dbReference type="PDBsum" id="6XZA"/>
<dbReference type="PDBsum" id="6XZB"/>
<dbReference type="PDBsum" id="6Y69"/>
<dbReference type="PDBsum" id="6YS3"/>
<dbReference type="PDBsum" id="6YSR"/>
<dbReference type="PDBsum" id="6YSS"/>
<dbReference type="PDBsum" id="6YST"/>
<dbReference type="PDBsum" id="6YSU"/>
<dbReference type="PDBsum" id="6ZTJ"/>
<dbReference type="PDBsum" id="6ZTL"/>
<dbReference type="PDBsum" id="6ZTM"/>
<dbReference type="PDBsum" id="6ZTN"/>
<dbReference type="PDBsum" id="6ZTO"/>
<dbReference type="PDBsum" id="6ZTP"/>
<dbReference type="PDBsum" id="6ZU1"/>
<dbReference type="PDBsum" id="7ABZ"/>
<dbReference type="PDBsum" id="7AC7"/>
<dbReference type="PDBsum" id="7ACJ"/>
<dbReference type="PDBsum" id="7ACR"/>
<dbReference type="PDBsum" id="7B5K"/>
<dbReference type="PDBsum" id="7BL2"/>
<dbReference type="PDBsum" id="7BL3"/>
<dbReference type="PDBsum" id="7BL4"/>
<dbReference type="PDBsum" id="7BL5"/>
<dbReference type="PDBsum" id="7BL6"/>
<dbReference type="PDBsum" id="7BV8"/>
<dbReference type="PDBsum" id="7D6Z"/>
<dbReference type="PDBsum" id="7D80"/>
<dbReference type="PDBsum" id="7JSS"/>
<dbReference type="PDBsum" id="7JSW"/>
<dbReference type="PDBsum" id="7JSZ"/>
<dbReference type="PDBsum" id="7JT1"/>
<dbReference type="PDBsum" id="7JT2"/>
<dbReference type="PDBsum" id="7JT3"/>
<dbReference type="PDBsum" id="7K00"/>
<dbReference type="PDBsum" id="7K50"/>
<dbReference type="PDBsum" id="7K51"/>
<dbReference type="PDBsum" id="7K52"/>
<dbReference type="PDBsum" id="7K53"/>
<dbReference type="PDBsum" id="7K54"/>
<dbReference type="PDBsum" id="7K55"/>
<dbReference type="PDBsum" id="7LV0"/>
<dbReference type="PDBsum" id="7LVK"/>
<dbReference type="PDBsum" id="7M5D"/>
<dbReference type="PDBsum" id="7N1P"/>
<dbReference type="PDBsum" id="7N2C"/>
<dbReference type="PDBsum" id="7N2U"/>
<dbReference type="PDBsum" id="7N2V"/>
<dbReference type="PDBsum" id="7N30"/>
<dbReference type="PDBsum" id="7N31"/>
<dbReference type="PDBsum" id="7NBU"/>
<dbReference type="PDBsum" id="7NSO"/>
<dbReference type="PDBsum" id="7NSP"/>
<dbReference type="PDBsum" id="7NSQ"/>
<dbReference type="PDBsum" id="7NWT"/>
<dbReference type="PDBsum" id="7NWW"/>
<dbReference type="PDBsum" id="7O19"/>
<dbReference type="PDBsum" id="7O1A"/>
<dbReference type="PDBsum" id="7O1C"/>
<dbReference type="PDBsum" id="7OIF"/>
<dbReference type="PDBsum" id="7OIG"/>
<dbReference type="PDBsum" id="7OII"/>
<dbReference type="PDBsum" id="7OIZ"/>
<dbReference type="PDBsum" id="7OJ0"/>
<dbReference type="PDBsum" id="7OT5"/>
<dbReference type="PDBsum" id="7P3K"/>
<dbReference type="PDBsum" id="7PJS"/>
<dbReference type="PDBsum" id="7PJT"/>
<dbReference type="PDBsum" id="7PJU"/>
<dbReference type="PDBsum" id="7PJV"/>
<dbReference type="PDBsum" id="7PJW"/>
<dbReference type="PDBsum" id="7PJX"/>
<dbReference type="PDBsum" id="7PJY"/>
<dbReference type="PDBsum" id="7PJZ"/>
<dbReference type="PDBsum" id="7Q4K"/>
<dbReference type="PDBsum" id="7QG8"/>
<dbReference type="PDBsum" id="7QGH"/>
<dbReference type="PDBsum" id="7QGN"/>
<dbReference type="PDBsum" id="7QGR"/>
<dbReference type="PDBsum" id="7QQ3"/>
<dbReference type="PDBsum" id="7S1G"/>
<dbReference type="PDBsum" id="7S1H"/>
<dbReference type="PDBsum" id="7S1I"/>
<dbReference type="PDBsum" id="7S1J"/>
<dbReference type="PDBsum" id="7S1K"/>
<dbReference type="PDBsum" id="7SA4"/>
<dbReference type="PDBsum" id="7SS9"/>
<dbReference type="PDBsum" id="7SSD"/>
<dbReference type="PDBsum" id="7SSL"/>
<dbReference type="PDBsum" id="7SSN"/>
<dbReference type="PDBsum" id="7SSO"/>
<dbReference type="PDBsum" id="7SSW"/>
<dbReference type="PDBsum" id="7ST2"/>
<dbReference type="PDBsum" id="7ST6"/>
<dbReference type="PDBsum" id="7ST7"/>
<dbReference type="PDBsum" id="7TOS"/>
<dbReference type="PDBsum" id="7UG7"/>
<dbReference type="PDBsum" id="7UPH"/>
<dbReference type="PDBsum" id="7Y7C"/>
<dbReference type="PDBsum" id="7Y7D"/>
<dbReference type="PDBsum" id="7Y7E"/>
<dbReference type="PDBsum" id="7Y7F"/>
<dbReference type="PDBsum" id="7Y7G"/>
<dbReference type="PDBsum" id="7Y7H"/>
<dbReference type="PDBsum" id="7YLA"/>
<dbReference type="PDBsum" id="7Z20"/>
<dbReference type="PDBsum" id="7ZOD"/>
<dbReference type="PDBsum" id="7ZP8"/>
<dbReference type="PDBsum" id="7ZQ5"/>
<dbReference type="PDBsum" id="7ZQ6"/>
<dbReference type="PDBsum" id="7ZTA"/>
<dbReference type="PDBsum" id="8A3L"/>
<dbReference type="PDBsum" id="8AKN"/>
<dbReference type="PDBsum" id="8AM9"/>
<dbReference type="PDBsum" id="8ANA"/>
<dbReference type="PDBsum" id="8AP4"/>
<dbReference type="PDBsum" id="8AYE"/>
<dbReference type="PDBsum" id="8B0X"/>
<dbReference type="PDBsum" id="8B7Y"/>
<dbReference type="PDBsum" id="8BF7"/>
<dbReference type="PDBsum" id="8BGE"/>
<dbReference type="PDBsum" id="8BGH"/>
<dbReference type="PDBsum" id="8BH4"/>
<dbReference type="PDBsum" id="8BHJ"/>
<dbReference type="PDBsum" id="8BHL"/>
<dbReference type="PDBsum" id="8BHN"/>
<dbReference type="PDBsum" id="8BHP"/>
<dbReference type="PDBsum" id="8BIL"/>
<dbReference type="PDBsum" id="8BIM"/>
<dbReference type="PDBsum" id="8C8X"/>
<dbReference type="PDBsum" id="8C8Y"/>
<dbReference type="PDBsum" id="8C8Z"/>
<dbReference type="PDBsum" id="8C90"/>
<dbReference type="PDBsum" id="8C94"/>
<dbReference type="PDBsum" id="8C95"/>
<dbReference type="PDBsum" id="8CAM"/>
<dbReference type="PDBsum" id="8CEU"/>
<dbReference type="PDBsum" id="8CGD"/>
<dbReference type="PDBsum" id="8CGK"/>
<dbReference type="PDBsum" id="8CGV"/>
<dbReference type="PDBsum" id="8EIU"/>
<dbReference type="PDBsum" id="8EKC"/>
<dbReference type="PDBsum" id="8EMM"/>
<dbReference type="PDBsum" id="8FIZ"/>
<dbReference type="PDBsum" id="8FTO"/>
<dbReference type="PDBsum" id="8FZD"/>
<dbReference type="PDBsum" id="8FZE"/>
<dbReference type="PDBsum" id="8FZF"/>
<dbReference type="PDBsum" id="8FZG"/>
<dbReference type="PDBsum" id="8FZH"/>
<dbReference type="PDBsum" id="8FZI"/>
<dbReference type="PDBsum" id="8FZJ"/>
<dbReference type="PDBsum" id="8G2U"/>
<dbReference type="PDBsum" id="8G31"/>
<dbReference type="PDBsum" id="8G34"/>
<dbReference type="PDBsum" id="8G38"/>
<dbReference type="PDBsum" id="8G6W"/>
<dbReference type="PDBsum" id="8G6X"/>
<dbReference type="PDBsum" id="8G6Y"/>
<dbReference type="PDBsum" id="8G7P"/>
<dbReference type="PDBsum" id="8G7Q"/>
<dbReference type="PDBsum" id="8G7R"/>
<dbReference type="PDBsum" id="8G7S"/>
<dbReference type="PDBsum" id="8HSP"/>
<dbReference type="PDBsum" id="8HTZ"/>
<dbReference type="PDBsum" id="8HU1"/>
<dbReference type="PDBsum" id="8IFB"/>
<dbReference type="PDBsum" id="8IFC"/>
<dbReference type="PDBsum" id="8J1Z"/>
<dbReference type="PDBsum" id="8P16"/>
<dbReference type="PDBsum" id="8P17"/>
<dbReference type="PDBsum" id="8P18"/>
<dbReference type="PDBsum" id="8PEG"/>
<dbReference type="PDBsum" id="8PHJ"/>
<dbReference type="PDBsum" id="8PKL"/>
<dbReference type="PDBsum" id="8PVA"/>
<dbReference type="PDBsum" id="8Q4F"/>
<dbReference type="PDBsum" id="8QBT"/>
<dbReference type="PDBsum" id="8QK7"/>
<dbReference type="PDBsum" id="8QOA"/>
<dbReference type="PDBsum" id="8R6C"/>
<dbReference type="PDBsum" id="8R8M"/>
<dbReference type="PDBsum" id="8RPY"/>
<dbReference type="PDBsum" id="8RPZ"/>
<dbReference type="PDBsum" id="8RQ0"/>
<dbReference type="PDBsum" id="8RQ2"/>
<dbReference type="PDBsum" id="8SYL"/>
<dbReference type="PDBsum" id="8T5D"/>
<dbReference type="PDBsum" id="8T5H"/>
<dbReference type="PDBsum" id="8UPO"/>
<dbReference type="PDBsum" id="8UPR"/>
<dbReference type="PDBsum" id="8UQL"/>
<dbReference type="PDBsum" id="8UQM"/>
<dbReference type="PDBsum" id="8UQP"/>
<dbReference type="PDBsum" id="8UR0"/>
<dbReference type="PDBsum" id="8URH"/>
<dbReference type="PDBsum" id="8URI"/>
<dbReference type="PDBsum" id="8URX"/>
<dbReference type="PDBsum" id="8URY"/>
<dbReference type="PDBsum" id="8VS9"/>
<dbReference type="PDBsum" id="8VSA"/>
<dbReference type="PDBsum" id="8W51"/>
<dbReference type="PDBsum" id="8YUO"/>
<dbReference type="PDBsum" id="8YUP"/>
<dbReference type="PDBsum" id="8YUQ"/>
<dbReference type="PDBsum" id="8YUR"/>
<dbReference type="PDBsum" id="8YUS"/>
<dbReference type="PDBsum" id="9AX7"/>
<dbReference type="PDBsum" id="9CG5"/>
<dbReference type="PDBsum" id="9CG6"/>
<dbReference type="PDBsum" id="9CG7"/>
<dbReference type="PDBsum" id="9D89"/>
<dbReference type="PDBsum" id="9FBV"/>
<dbReference type="PDBsum" id="9GFT"/>
<dbReference type="PDBsum" id="9GGR"/>
<dbReference type="PDBsum" id="9H3P"/>
<dbReference type="PDBsum" id="9H3Q"/>
<dbReference type="PDBsum" id="9H3R"/>
<dbReference type="PDBsum" id="9H3S"/>
<dbReference type="PDBsum" id="9H3V"/>
<dbReference type="PDBsum" id="9H3W"/>
<dbReference type="PDBsum" id="9H3X"/>
<dbReference type="PDBsum" id="9H3Y"/>
<dbReference type="PDBsum" id="9H3Z"/>
<dbReference type="PDBsum" id="9HA4"/>
<dbReference type="PDBsum" id="9HA6"/>
<dbReference type="PDBsum" id="9HA7"/>
<dbReference type="PDBsum" id="9MOR"/>
<dbReference type="PDBsum" id="9MQ4"/>
<dbReference type="EMDB" id="EMD-0076"/>
<dbReference type="EMDB" id="EMD-0080"/>
<dbReference type="EMDB" id="EMD-0081"/>
<dbReference type="EMDB" id="EMD-0082"/>
<dbReference type="EMDB" id="EMD-0083"/>
<dbReference type="EMDB" id="EMD-0137"/>
<dbReference type="EMDB" id="EMD-0139"/>
<dbReference type="EMDB" id="EMD-0261"/>
<dbReference type="EMDB" id="EMD-0322"/>
<dbReference type="EMDB" id="EMD-10073"/>
<dbReference type="EMDB" id="EMD-10353"/>
<dbReference type="EMDB" id="EMD-10453"/>
<dbReference type="EMDB" id="EMD-10458"/>
<dbReference type="EMDB" id="EMD-10655"/>
<dbReference type="EMDB" id="EMD-10656"/>
<dbReference type="EMDB" id="EMD-10657"/>
<dbReference type="EMDB" id="EMD-10705"/>
<dbReference type="EMDB" id="EMD-10905"/>
<dbReference type="EMDB" id="EMD-10906"/>
<dbReference type="EMDB" id="EMD-10907"/>
<dbReference type="EMDB" id="EMD-10908"/>
<dbReference type="EMDB" id="EMD-11418"/>
<dbReference type="EMDB" id="EMD-11419"/>
<dbReference type="EMDB" id="EMD-11420"/>
<dbReference type="EMDB" id="EMD-11421"/>
<dbReference type="EMDB" id="EMD-11422"/>
<dbReference type="EMDB" id="EMD-11423"/>
<dbReference type="EMDB" id="EMD-11426"/>
<dbReference type="EMDB" id="EMD-11710"/>
<dbReference type="EMDB" id="EMD-11713"/>
<dbReference type="EMDB" id="EMD-11717"/>
<dbReference type="EMDB" id="EMD-11718"/>
<dbReference type="EMDB" id="EMD-12035"/>
<dbReference type="EMDB" id="EMD-12215"/>
<dbReference type="EMDB" id="EMD-12216"/>
<dbReference type="EMDB" id="EMD-12217"/>
<dbReference type="EMDB" id="EMD-12218"/>
<dbReference type="EMDB" id="EMD-12219"/>
<dbReference type="EMDB" id="EMD-12261"/>
<dbReference type="EMDB" id="EMD-12573"/>
<dbReference type="EMDB" id="EMD-12574"/>
<dbReference type="EMDB" id="EMD-12575"/>
<dbReference type="EMDB" id="EMD-12635"/>
<dbReference type="EMDB" id="EMD-12636"/>
<dbReference type="EMDB" id="EMD-12693"/>
<dbReference type="EMDB" id="EMD-12694"/>
<dbReference type="EMDB" id="EMD-12695"/>
<dbReference type="EMDB" id="EMD-12928"/>
<dbReference type="EMDB" id="EMD-12929"/>
<dbReference type="EMDB" id="EMD-12930"/>
<dbReference type="EMDB" id="EMD-12936"/>
<dbReference type="EMDB" id="EMD-12937"/>
<dbReference type="EMDB" id="EMD-13055"/>
<dbReference type="EMDB" id="EMD-13180"/>
<dbReference type="EMDB" id="EMD-13458"/>
<dbReference type="EMDB" id="EMD-13459"/>
<dbReference type="EMDB" id="EMD-13461"/>
<dbReference type="EMDB" id="EMD-13462"/>
<dbReference type="EMDB" id="EMD-13463"/>
<dbReference type="EMDB" id="EMD-13464"/>
<dbReference type="EMDB" id="EMD-13465"/>
<dbReference type="EMDB" id="EMD-13805"/>
<dbReference type="EMDB" id="EMD-13952"/>
<dbReference type="EMDB" id="EMD-13955"/>
<dbReference type="EMDB" id="EMD-13956"/>
<dbReference type="EMDB" id="EMD-13958"/>
<dbReference type="EMDB" id="EMD-14121"/>
<dbReference type="EMDB" id="EMD-14454"/>
<dbReference type="EMDB" id="EMD-14846"/>
<dbReference type="EMDB" id="EMD-14850"/>
<dbReference type="EMDB" id="EMD-14864"/>
<dbReference type="EMDB" id="EMD-14865"/>
<dbReference type="EMDB" id="EMD-14956"/>
<dbReference type="EMDB" id="EMD-15116"/>
<dbReference type="EMDB" id="EMD-15488"/>
<dbReference type="EMDB" id="EMD-15523"/>
<dbReference type="EMDB" id="EMD-15533"/>
<dbReference type="EMDB" id="EMD-15558"/>
<dbReference type="EMDB" id="EMD-15712"/>
<dbReference type="EMDB" id="EMD-15793"/>
<dbReference type="EMDB" id="EMD-15905"/>
<dbReference type="EMDB" id="EMD-16015"/>
<dbReference type="EMDB" id="EMD-16029"/>
<dbReference type="EMDB" id="EMD-16031"/>
<dbReference type="EMDB" id="EMD-16047"/>
<dbReference type="EMDB" id="EMD-16057"/>
<dbReference type="EMDB" id="EMD-16059"/>
<dbReference type="EMDB" id="EMD-16062"/>
<dbReference type="EMDB" id="EMD-16065"/>
<dbReference type="EMDB" id="EMD-16081"/>
<dbReference type="EMDB" id="EMD-16082"/>
<dbReference type="EMDB" id="EMD-16494"/>
<dbReference type="EMDB" id="EMD-16495"/>
<dbReference type="EMDB" id="EMD-16496"/>
<dbReference type="EMDB" id="EMD-16497"/>
<dbReference type="EMDB" id="EMD-16501"/>
<dbReference type="EMDB" id="EMD-16502"/>
<dbReference type="EMDB" id="EMD-16530"/>
<dbReference type="EMDB" id="EMD-16613"/>
<dbReference type="EMDB" id="EMD-16641"/>
<dbReference type="EMDB" id="EMD-16646"/>
<dbReference type="EMDB" id="EMD-16652"/>
<dbReference type="EMDB" id="EMD-17346"/>
<dbReference type="EMDB" id="EMD-17347"/>
<dbReference type="EMDB" id="EMD-17348"/>
<dbReference type="EMDB" id="EMD-17631"/>
<dbReference type="EMDB" id="EMD-17667"/>
<dbReference type="EMDB" id="EMD-17743"/>
<dbReference type="EMDB" id="EMD-17959"/>
<dbReference type="EMDB" id="EMD-18145"/>
<dbReference type="EMDB" id="EMD-18320"/>
<dbReference type="EMDB" id="EMD-18458"/>
<dbReference type="EMDB" id="EMD-18534"/>
<dbReference type="EMDB" id="EMD-18950"/>
<dbReference type="EMDB" id="EMD-19004"/>
<dbReference type="EMDB" id="EMD-19426"/>
<dbReference type="EMDB" id="EMD-19427"/>
<dbReference type="EMDB" id="EMD-19428"/>
<dbReference type="EMDB" id="EMD-19429"/>
<dbReference type="EMDB" id="EMD-20048"/>
<dbReference type="EMDB" id="EMD-20052"/>
<dbReference type="EMDB" id="EMD-21420"/>
<dbReference type="EMDB" id="EMD-21421"/>
<dbReference type="EMDB" id="EMD-21422"/>
<dbReference type="EMDB" id="EMD-21625"/>
<dbReference type="EMDB" id="EMD-21630"/>
<dbReference type="EMDB" id="EMD-21631"/>
<dbReference type="EMDB" id="EMD-21632"/>
<dbReference type="EMDB" id="EMD-21633"/>
<dbReference type="EMDB" id="EMD-21634"/>
<dbReference type="EMDB" id="EMD-21635"/>
<dbReference type="EMDB" id="EMD-21636"/>
<dbReference type="EMDB" id="EMD-21637"/>
<dbReference type="EMDB" id="EMD-21638"/>
<dbReference type="EMDB" id="EMD-21639"/>
<dbReference type="EMDB" id="EMD-21640"/>
<dbReference type="EMDB" id="EMD-21641"/>
<dbReference type="EMDB" id="EMD-21856"/>
<dbReference type="EMDB" id="EMD-21857"/>
<dbReference type="EMDB" id="EMD-21858"/>
<dbReference type="EMDB" id="EMD-22459"/>
<dbReference type="EMDB" id="EMD-22461"/>
<dbReference type="EMDB" id="EMD-22464"/>
<dbReference type="EMDB" id="EMD-22466"/>
<dbReference type="EMDB" id="EMD-22469"/>
<dbReference type="EMDB" id="EMD-22472"/>
<dbReference type="EMDB" id="EMD-22669"/>
<dbReference type="EMDB" id="EMD-22670"/>
<dbReference type="EMDB" id="EMD-22671"/>
<dbReference type="EMDB" id="EMD-22672"/>
<dbReference type="EMDB" id="EMD-22673"/>
<dbReference type="EMDB" id="EMD-22674"/>
<dbReference type="EMDB" id="EMD-23528"/>
<dbReference type="EMDB" id="EMD-24120"/>
<dbReference type="EMDB" id="EMD-24132"/>
<dbReference type="EMDB" id="EMD-24133"/>
<dbReference type="EMDB" id="EMD-24134"/>
<dbReference type="EMDB" id="EMD-24135"/>
<dbReference type="EMDB" id="EMD-24136"/>
<dbReference type="EMDB" id="EMD-24803"/>
<dbReference type="EMDB" id="EMD-25405"/>
<dbReference type="EMDB" id="EMD-25407"/>
<dbReference type="EMDB" id="EMD-25409"/>
<dbReference type="EMDB" id="EMD-25410"/>
<dbReference type="EMDB" id="EMD-25411"/>
<dbReference type="EMDB" id="EMD-25415"/>
<dbReference type="EMDB" id="EMD-25418"/>
<dbReference type="EMDB" id="EMD-25420"/>
<dbReference type="EMDB" id="EMD-25421"/>
<dbReference type="EMDB" id="EMD-30215"/>
<dbReference type="EMDB" id="EMD-30598"/>
<dbReference type="EMDB" id="EMD-30611"/>
<dbReference type="EMDB" id="EMD-33660"/>
<dbReference type="EMDB" id="EMD-33661"/>
<dbReference type="EMDB" id="EMD-33662"/>
<dbReference type="EMDB" id="EMD-33663"/>
<dbReference type="EMDB" id="EMD-33664"/>
<dbReference type="EMDB" id="EMD-33665"/>
<dbReference type="EMDB" id="EMD-33904"/>
<dbReference type="EMDB" id="EMD-3489"/>
<dbReference type="EMDB" id="EMD-3490"/>
<dbReference type="EMDB" id="EMD-3492"/>
<dbReference type="EMDB" id="EMD-3493"/>
<dbReference type="EMDB" id="EMD-35001"/>
<dbReference type="EMDB" id="EMD-35020"/>
<dbReference type="EMDB" id="EMD-35022"/>
<dbReference type="EMDB" id="EMD-3508"/>
<dbReference type="EMDB" id="EMD-35411"/>
<dbReference type="EMDB" id="EMD-35412"/>
<dbReference type="EMDB" id="EMD-35939"/>
<dbReference type="EMDB" id="EMD-3617"/>
<dbReference type="EMDB" id="EMD-3713"/>
<dbReference type="EMDB" id="EMD-37271"/>
<dbReference type="EMDB" id="EMD-3730"/>
<dbReference type="EMDB" id="EMD-3898"/>
<dbReference type="EMDB" id="EMD-3899"/>
<dbReference type="EMDB" id="EMD-3903"/>
<dbReference type="EMDB" id="EMD-39577"/>
<dbReference type="EMDB" id="EMD-39578"/>
<dbReference type="EMDB" id="EMD-39579"/>
<dbReference type="EMDB" id="EMD-39580"/>
<dbReference type="EMDB" id="EMD-39581"/>
<dbReference type="EMDB" id="EMD-4001"/>
<dbReference type="EMDB" id="EMD-4121"/>
<dbReference type="EMDB" id="EMD-4122"/>
<dbReference type="EMDB" id="EMD-4123"/>
<dbReference type="EMDB" id="EMD-4124"/>
<dbReference type="EMDB" id="EMD-4125"/>
<dbReference type="EMDB" id="EMD-4126"/>
<dbReference type="EMDB" id="EMD-42504"/>
<dbReference type="EMDB" id="EMD-4378"/>
<dbReference type="EMDB" id="EMD-4379"/>
<dbReference type="EMDB" id="EMD-4380"/>
<dbReference type="EMDB" id="EMD-4383"/>
<dbReference type="EMDB" id="EMD-43929"/>
<dbReference type="EMDB" id="EMD-4476"/>
<dbReference type="EMDB" id="EMD-4477"/>
<dbReference type="EMDB" id="EMD-4478"/>
<dbReference type="EMDB" id="EMD-45569"/>
<dbReference type="EMDB" id="EMD-45572"/>
<dbReference type="EMDB" id="EMD-45573"/>
<dbReference type="EMDB" id="EMD-4638"/>
<dbReference type="EMDB" id="EMD-46632"/>
<dbReference type="EMDB" id="EMD-48479"/>
<dbReference type="EMDB" id="EMD-48513"/>
<dbReference type="EMDB" id="EMD-50296"/>
<dbReference type="EMDB" id="EMD-51318"/>
<dbReference type="EMDB" id="EMD-51340"/>
<dbReference type="EMDB" id="EMD-51833"/>
<dbReference type="EMDB" id="EMD-51834"/>
<dbReference type="EMDB" id="EMD-51835"/>
<dbReference type="EMDB" id="EMD-51836"/>
<dbReference type="EMDB" id="EMD-51839"/>
<dbReference type="EMDB" id="EMD-51840"/>
<dbReference type="EMDB" id="EMD-51841"/>
<dbReference type="EMDB" id="EMD-51842"/>
<dbReference type="EMDB" id="EMD-51843"/>
<dbReference type="EMDB" id="EMD-51976"/>
<dbReference type="EMDB" id="EMD-51978"/>
<dbReference type="EMDB" id="EMD-51979"/>
<dbReference type="EMDB" id="EMD-6667"/>
<dbReference type="EMDB" id="EMD-7289"/>
<dbReference type="EMDB" id="EMD-7341"/>
<dbReference type="EMDB" id="EMD-7970"/>
<dbReference type="EMDB" id="EMD-8000"/>
<dbReference type="EMDB" id="EMD-8001"/>
<dbReference type="EMDB" id="EMD-8002"/>
<dbReference type="EMDB" id="EMD-8003"/>
<dbReference type="EMDB" id="EMD-8004"/>
<dbReference type="EMDB" id="EMD-8107"/>
<dbReference type="EMDB" id="EMD-8175"/>
<dbReference type="EMDB" id="EMD-8176"/>
<dbReference type="EMDB" id="EMD-8237"/>
<dbReference type="EMDB" id="EMD-8238"/>
<dbReference type="EMDB" id="EMD-8279"/>
<dbReference type="EMDB" id="EMD-8280"/>
<dbReference type="EMDB" id="EMD-8281"/>
<dbReference type="EMDB" id="EMD-8282"/>
<dbReference type="EMDB" id="EMD-8505"/>
<dbReference type="EMDB" id="EMD-8615"/>
<dbReference type="EMDB" id="EMD-8616"/>
<dbReference type="EMDB" id="EMD-8617"/>
<dbReference type="EMDB" id="EMD-8618"/>
<dbReference type="EMDB" id="EMD-8619"/>
<dbReference type="EMDB" id="EMD-8620"/>
<dbReference type="EMDB" id="EMD-8813"/>
<dbReference type="EMDB" id="EMD-8814"/>
<dbReference type="EMDB" id="EMD-8815"/>
<dbReference type="EMDB" id="EMD-8828"/>
<dbReference type="SMR" id="P68919"/>
<dbReference type="BioGRID" id="4263495">
    <property type="interactions" value="6"/>
</dbReference>
<dbReference type="BioGRID" id="849990">
    <property type="interactions" value="3"/>
</dbReference>
<dbReference type="ComplexPortal" id="CPX-3807">
    <property type="entry name" value="50S large ribosomal subunit"/>
</dbReference>
<dbReference type="DIP" id="DIP-35885N"/>
<dbReference type="FunCoup" id="P68919">
    <property type="interactions" value="321"/>
</dbReference>
<dbReference type="IntAct" id="P68919">
    <property type="interactions" value="29"/>
</dbReference>
<dbReference type="STRING" id="511145.b2185"/>
<dbReference type="jPOST" id="P68919"/>
<dbReference type="PaxDb" id="511145-b2185"/>
<dbReference type="EnsemblBacteria" id="AAC75246">
    <property type="protein sequence ID" value="AAC75246"/>
    <property type="gene ID" value="b2185"/>
</dbReference>
<dbReference type="GeneID" id="93774996"/>
<dbReference type="GeneID" id="945618"/>
<dbReference type="KEGG" id="ecj:JW2173"/>
<dbReference type="KEGG" id="eco:b2185"/>
<dbReference type="KEGG" id="ecoc:C3026_12220"/>
<dbReference type="PATRIC" id="fig|1411691.4.peg.51"/>
<dbReference type="EchoBASE" id="EB0878"/>
<dbReference type="eggNOG" id="COG1825">
    <property type="taxonomic scope" value="Bacteria"/>
</dbReference>
<dbReference type="HOGENOM" id="CLU_137946_0_0_6"/>
<dbReference type="InParanoid" id="P68919"/>
<dbReference type="OMA" id="DHDKVWN"/>
<dbReference type="OrthoDB" id="9806411at2"/>
<dbReference type="PhylomeDB" id="P68919"/>
<dbReference type="BioCyc" id="EcoCyc:EG10885-MONOMER"/>
<dbReference type="BioCyc" id="MetaCyc:EG10885-MONOMER"/>
<dbReference type="EvolutionaryTrace" id="P68919"/>
<dbReference type="PRO" id="PR:P68919"/>
<dbReference type="Proteomes" id="UP000000625">
    <property type="component" value="Chromosome"/>
</dbReference>
<dbReference type="GO" id="GO:0005737">
    <property type="term" value="C:cytoplasm"/>
    <property type="evidence" value="ECO:0000314"/>
    <property type="project" value="ComplexPortal"/>
</dbReference>
<dbReference type="GO" id="GO:0005829">
    <property type="term" value="C:cytosol"/>
    <property type="evidence" value="ECO:0000314"/>
    <property type="project" value="EcoCyc"/>
</dbReference>
<dbReference type="GO" id="GO:0022625">
    <property type="term" value="C:cytosolic large ribosomal subunit"/>
    <property type="evidence" value="ECO:0000314"/>
    <property type="project" value="CAFA"/>
</dbReference>
<dbReference type="GO" id="GO:0008097">
    <property type="term" value="F:5S rRNA binding"/>
    <property type="evidence" value="ECO:0000314"/>
    <property type="project" value="EcoCyc"/>
</dbReference>
<dbReference type="GO" id="GO:0003735">
    <property type="term" value="F:structural constituent of ribosome"/>
    <property type="evidence" value="ECO:0000314"/>
    <property type="project" value="CAFA"/>
</dbReference>
<dbReference type="GO" id="GO:0002181">
    <property type="term" value="P:cytoplasmic translation"/>
    <property type="evidence" value="ECO:0000303"/>
    <property type="project" value="ComplexPortal"/>
</dbReference>
<dbReference type="GO" id="GO:0017148">
    <property type="term" value="P:negative regulation of translation"/>
    <property type="evidence" value="ECO:0000315"/>
    <property type="project" value="EcoCyc"/>
</dbReference>
<dbReference type="GO" id="GO:0009314">
    <property type="term" value="P:response to radiation"/>
    <property type="evidence" value="ECO:0000315"/>
    <property type="project" value="EcoCyc"/>
</dbReference>
<dbReference type="GO" id="GO:0000027">
    <property type="term" value="P:ribosomal large subunit assembly"/>
    <property type="evidence" value="ECO:0000314"/>
    <property type="project" value="CAFA"/>
</dbReference>
<dbReference type="GO" id="GO:0006412">
    <property type="term" value="P:translation"/>
    <property type="evidence" value="ECO:0000315"/>
    <property type="project" value="EcoCyc"/>
</dbReference>
<dbReference type="CDD" id="cd00495">
    <property type="entry name" value="Ribosomal_L25_TL5_CTC"/>
    <property type="match status" value="1"/>
</dbReference>
<dbReference type="FunFam" id="2.40.240.10:FF:000002">
    <property type="entry name" value="50S ribosomal protein L25"/>
    <property type="match status" value="1"/>
</dbReference>
<dbReference type="Gene3D" id="2.40.240.10">
    <property type="entry name" value="Ribosomal Protein L25, Chain P"/>
    <property type="match status" value="1"/>
</dbReference>
<dbReference type="HAMAP" id="MF_01336">
    <property type="entry name" value="Ribosomal_bL25"/>
    <property type="match status" value="1"/>
</dbReference>
<dbReference type="InterPro" id="IPR020056">
    <property type="entry name" value="Rbsml_bL25/Gln-tRNA_synth_N"/>
</dbReference>
<dbReference type="InterPro" id="IPR011035">
    <property type="entry name" value="Ribosomal_bL25/Gln-tRNA_synth"/>
</dbReference>
<dbReference type="InterPro" id="IPR020055">
    <property type="entry name" value="Ribosomal_bL25_short"/>
</dbReference>
<dbReference type="InterPro" id="IPR029751">
    <property type="entry name" value="Ribosomal_L25_dom"/>
</dbReference>
<dbReference type="InterPro" id="IPR020930">
    <property type="entry name" value="Ribosomal_uL5_bac-type"/>
</dbReference>
<dbReference type="NCBIfam" id="NF004612">
    <property type="entry name" value="PRK05943.1"/>
    <property type="match status" value="1"/>
</dbReference>
<dbReference type="PANTHER" id="PTHR33284">
    <property type="entry name" value="RIBOSOMAL PROTEIN L25/GLN-TRNA SYNTHETASE, ANTI-CODON-BINDING DOMAIN-CONTAINING PROTEIN"/>
    <property type="match status" value="1"/>
</dbReference>
<dbReference type="PANTHER" id="PTHR33284:SF1">
    <property type="entry name" value="RIBOSOMAL PROTEIN L25_GLN-TRNA SYNTHETASE, ANTI-CODON-BINDING DOMAIN-CONTAINING PROTEIN"/>
    <property type="match status" value="1"/>
</dbReference>
<dbReference type="Pfam" id="PF01386">
    <property type="entry name" value="Ribosomal_L25p"/>
    <property type="match status" value="1"/>
</dbReference>
<dbReference type="SUPFAM" id="SSF50715">
    <property type="entry name" value="Ribosomal protein L25-like"/>
    <property type="match status" value="1"/>
</dbReference>
<proteinExistence type="evidence at protein level"/>
<organism>
    <name type="scientific">Escherichia coli (strain K12)</name>
    <dbReference type="NCBI Taxonomy" id="83333"/>
    <lineage>
        <taxon>Bacteria</taxon>
        <taxon>Pseudomonadati</taxon>
        <taxon>Pseudomonadota</taxon>
        <taxon>Gammaproteobacteria</taxon>
        <taxon>Enterobacterales</taxon>
        <taxon>Enterobacteriaceae</taxon>
        <taxon>Escherichia</taxon>
    </lineage>
</organism>
<sequence>MFTINAEVRKEQGKGASRRLRAANKFPAIIYGGKEAPLAIELDHDKVMNMQAKAEFYSEVLTIVVDGKEIKVKAQDVQRHPYKPKLQHIDFVRA</sequence>
<feature type="chain" id="PRO_0000181478" description="Large ribosomal subunit protein bL25">
    <location>
        <begin position="1"/>
        <end position="94"/>
    </location>
</feature>
<feature type="sequence conflict" description="In Ref. 6; AAA16413." evidence="20" ref="6">
    <original>LQHIDFVRA</original>
    <variation>CSTSTSFALNC</variation>
    <location>
        <begin position="86"/>
        <end position="94"/>
    </location>
</feature>
<feature type="strand" evidence="22">
    <location>
        <begin position="3"/>
        <end position="8"/>
    </location>
</feature>
<feature type="helix" evidence="22">
    <location>
        <begin position="14"/>
        <end position="22"/>
    </location>
</feature>
<feature type="strand" evidence="22">
    <location>
        <begin position="25"/>
        <end position="31"/>
    </location>
</feature>
<feature type="strand" evidence="22">
    <location>
        <begin position="33"/>
        <end position="35"/>
    </location>
</feature>
<feature type="strand" evidence="22">
    <location>
        <begin position="38"/>
        <end position="43"/>
    </location>
</feature>
<feature type="helix" evidence="22">
    <location>
        <begin position="44"/>
        <end position="51"/>
    </location>
</feature>
<feature type="turn" evidence="21">
    <location>
        <begin position="52"/>
        <end position="54"/>
    </location>
</feature>
<feature type="helix" evidence="22">
    <location>
        <begin position="55"/>
        <end position="58"/>
    </location>
</feature>
<feature type="strand" evidence="22">
    <location>
        <begin position="61"/>
        <end position="65"/>
    </location>
</feature>
<feature type="strand" evidence="22">
    <location>
        <begin position="68"/>
        <end position="79"/>
    </location>
</feature>
<feature type="strand" evidence="22">
    <location>
        <begin position="81"/>
        <end position="84"/>
    </location>
</feature>
<feature type="strand" evidence="22">
    <location>
        <begin position="86"/>
        <end position="93"/>
    </location>
</feature>
<keyword id="KW-0002">3D-structure</keyword>
<keyword id="KW-0903">Direct protein sequencing</keyword>
<keyword id="KW-1185">Reference proteome</keyword>
<keyword id="KW-0687">Ribonucleoprotein</keyword>
<keyword id="KW-0689">Ribosomal protein</keyword>
<keyword id="KW-0694">RNA-binding</keyword>
<keyword id="KW-0699">rRNA-binding</keyword>
<protein>
    <recommendedName>
        <fullName evidence="19">Large ribosomal subunit protein bL25</fullName>
    </recommendedName>
    <alternativeName>
        <fullName>50S ribosomal protein L25</fullName>
    </alternativeName>
</protein>
<name>RL25_ECOLI</name>
<accession>P68919</accession>
<accession>P02426</accession>
<accession>Q2MAQ6</accession>
<reference key="1">
    <citation type="journal article" date="1975" name="FEBS Lett.">
        <title>The primary structure of the 5S RNA binding protein L25 from Escherichia coli ribosomes.</title>
        <authorList>
            <person name="Dovgas N.V."/>
            <person name="Markova L.F."/>
            <person name="Mednikova T.A."/>
            <person name="Vinokurov L.M."/>
            <person name="Alakhov Y.B."/>
            <person name="Ovchinnikov Y.A."/>
        </authorList>
    </citation>
    <scope>PROTEIN SEQUENCE</scope>
    <scope>SUBUNIT</scope>
    <source>
        <strain>MRE-600</strain>
    </source>
</reference>
<reference key="2">
    <citation type="journal article" date="1975" name="FEBS Lett.">
        <authorList>
            <person name="Dovgas N.V."/>
            <person name="Markova L.F."/>
            <person name="Mednikova T.A."/>
            <person name="Vinokurov L.M."/>
            <person name="Alakhov Y.B."/>
            <person name="Ovchinnikov Y.A."/>
        </authorList>
    </citation>
    <scope>ERRATUM OF PUBMED:1093874</scope>
    <scope>SEQUENCE REVISION</scope>
</reference>
<reference key="3">
    <citation type="journal article" date="1975" name="Hoppe-Seyler's Z. Physiol. Chem.">
        <title>The primary structure of the 5s rRNA binding protein L25 of Escherichia coli ribosomes.</title>
        <authorList>
            <person name="Bitar K.G."/>
            <person name="Wittmann-Liebold B."/>
        </authorList>
    </citation>
    <scope>PROTEIN SEQUENCE</scope>
    <scope>SUBUNIT</scope>
    <source>
        <strain>K12</strain>
    </source>
</reference>
<reference key="4">
    <citation type="journal article" date="1976" name="Bioorg. Khim.">
        <title>Primary structure of the protein L25 from the ribosomes of E. coli MRE-600 forming part of the 5S-RNA-protein complex.</title>
        <authorList>
            <person name="Alakhov Y.B."/>
            <person name="Vinokurov L.M."/>
            <person name="Dovgas N.V."/>
            <person name="Markova L.F."/>
            <person name="Mednikova T.A."/>
            <person name="Motuz L.P."/>
            <person name="Kashparov I.A."/>
            <person name="Ovchinnikov Y.A."/>
        </authorList>
    </citation>
    <scope>PROTEIN SEQUENCE</scope>
    <scope>SUBUNIT</scope>
    <source>
        <strain>MRE-600</strain>
    </source>
</reference>
<reference key="5">
    <citation type="journal article" date="1991" name="Mol. Gen. Genet.">
        <title>Cloning, characterization, and physical location of the rplY gene which encodes ribosomal protein L25 in Escherichia coli K12.</title>
        <authorList>
            <person name="Uemura Y."/>
            <person name="Isono S."/>
            <person name="Isono K."/>
        </authorList>
    </citation>
    <scope>NUCLEOTIDE SEQUENCE [GENOMIC DNA]</scope>
    <source>
        <strain>K12</strain>
    </source>
</reference>
<reference key="6">
    <citation type="submission" date="1993-10" db="EMBL/GenBank/DDBJ databases">
        <title>Automated multiplex sequencing of the E.coli genome.</title>
        <authorList>
            <person name="Richterich P."/>
            <person name="Lakey N."/>
            <person name="Gryan G."/>
            <person name="Jaehn L."/>
            <person name="Mintz L."/>
            <person name="Robison K."/>
            <person name="Church G.M."/>
        </authorList>
    </citation>
    <scope>NUCLEOTIDE SEQUENCE [LARGE SCALE GENOMIC DNA]</scope>
    <source>
        <strain>K12 / BHB2600</strain>
    </source>
</reference>
<reference key="7">
    <citation type="journal article" date="1997" name="Science">
        <title>The complete genome sequence of Escherichia coli K-12.</title>
        <authorList>
            <person name="Blattner F.R."/>
            <person name="Plunkett G. III"/>
            <person name="Bloch C.A."/>
            <person name="Perna N.T."/>
            <person name="Burland V."/>
            <person name="Riley M."/>
            <person name="Collado-Vides J."/>
            <person name="Glasner J.D."/>
            <person name="Rode C.K."/>
            <person name="Mayhew G.F."/>
            <person name="Gregor J."/>
            <person name="Davis N.W."/>
            <person name="Kirkpatrick H.A."/>
            <person name="Goeden M.A."/>
            <person name="Rose D.J."/>
            <person name="Mau B."/>
            <person name="Shao Y."/>
        </authorList>
    </citation>
    <scope>NUCLEOTIDE SEQUENCE [LARGE SCALE GENOMIC DNA]</scope>
    <source>
        <strain>K12 / MG1655 / ATCC 47076</strain>
    </source>
</reference>
<reference key="8">
    <citation type="journal article" date="2006" name="Mol. Syst. Biol.">
        <title>Highly accurate genome sequences of Escherichia coli K-12 strains MG1655 and W3110.</title>
        <authorList>
            <person name="Hayashi K."/>
            <person name="Morooka N."/>
            <person name="Yamamoto Y."/>
            <person name="Fujita K."/>
            <person name="Isono K."/>
            <person name="Choi S."/>
            <person name="Ohtsubo E."/>
            <person name="Baba T."/>
            <person name="Wanner B.L."/>
            <person name="Mori H."/>
            <person name="Horiuchi T."/>
        </authorList>
    </citation>
    <scope>NUCLEOTIDE SEQUENCE [LARGE SCALE GENOMIC DNA]</scope>
    <source>
        <strain>K12 / W3110 / ATCC 27325 / DSM 5911</strain>
    </source>
</reference>
<reference key="9">
    <citation type="journal article" date="1997" name="Electrophoresis">
        <title>Comparing the predicted and observed properties of proteins encoded in the genome of Escherichia coli K-12.</title>
        <authorList>
            <person name="Link A.J."/>
            <person name="Robison K."/>
            <person name="Church G.M."/>
        </authorList>
    </citation>
    <scope>PROTEIN SEQUENCE OF 1-12</scope>
    <source>
        <strain>K12 / EMG2</strain>
    </source>
</reference>
<reference key="10">
    <citation type="journal article" date="1998" name="FEMS Microbiol. Lett.">
        <title>Small genes/gene-products in Escherichia coli K-12.</title>
        <authorList>
            <person name="Wasinger V.C."/>
            <person name="Humphery-Smith I."/>
        </authorList>
    </citation>
    <scope>PROTEIN SEQUENCE OF 1-10</scope>
    <source>
        <strain>K12</strain>
    </source>
</reference>
<reference key="11">
    <citation type="journal article" date="1987" name="J. Biol. Chem.">
        <title>Incorporation of six additional proteins to complete the assembly map of the 50 S subunit from Escherichia coli ribosomes.</title>
        <authorList>
            <person name="Herold M."/>
            <person name="Nierhaus K.H."/>
        </authorList>
    </citation>
    <scope>ASSEMBLY MAP OF THE 50S SUBUNIT</scope>
    <scope>BINDING TO 5S RRNA</scope>
    <source>
        <strain>K12</strain>
    </source>
</reference>
<reference key="12">
    <citation type="journal article" date="1978" name="Biochemistry">
        <title>Stoichiometry, cooperativity, and stability of interactions between 5S RNA and proteins L5, L18, and L25 from the 50S ribosomal subunit of Escherichia coli.</title>
        <authorList>
            <person name="Spierer P."/>
            <person name="Zimmermann R.A."/>
        </authorList>
    </citation>
    <scope>FORMATION OF THE 5S RRNA/L5/L18/L25 SUBCOMPLEX</scope>
    <source>
        <strain>MRE-600</strain>
    </source>
</reference>
<reference key="13">
    <citation type="journal article" date="1996" name="FEBS Lett.">
        <title>5S rRNA sugar-phosphate backbone protection in complexes with specific ribosomal proteins.</title>
        <authorList>
            <person name="Shpanchenko O.V."/>
            <person name="Zvereva M.I."/>
            <person name="Dontsova O.A."/>
            <person name="Nierhaus K.H."/>
            <person name="Bogdanov A.A."/>
        </authorList>
    </citation>
    <scope>CHARACTERIZATION OF THE 5S RRNA/L5/L18/L25 SUBCOMPLEX</scope>
    <source>
        <strain>K12 / A19</strain>
    </source>
</reference>
<reference key="14">
    <citation type="journal article" date="1997" name="Electrophoresis">
        <title>Escherichia coli proteome analysis using the gene-protein database.</title>
        <authorList>
            <person name="VanBogelen R.A."/>
            <person name="Abshire K.Z."/>
            <person name="Moldover B."/>
            <person name="Olson E.R."/>
            <person name="Neidhardt F.C."/>
        </authorList>
    </citation>
    <scope>IDENTIFICATION BY 2D-GEL</scope>
</reference>
<reference key="15">
    <citation type="journal article" date="1999" name="Anal. Biochem.">
        <title>Observation of Escherichia coli ribosomal proteins and their posttranslational modifications by mass spectrometry.</title>
        <authorList>
            <person name="Arnold R.J."/>
            <person name="Reilly J.P."/>
        </authorList>
    </citation>
    <scope>MASS SPECTROMETRY</scope>
    <scope>SUBUNIT</scope>
    <source>
        <strain>K12 / ATCC 25404 / DSM 5698 / NCIMB 11290</strain>
    </source>
</reference>
<reference key="16">
    <citation type="journal article" date="2014" name="Curr. Opin. Struct. Biol.">
        <title>A new system for naming ribosomal proteins.</title>
        <authorList>
            <person name="Ban N."/>
            <person name="Beckmann R."/>
            <person name="Cate J.H.D."/>
            <person name="Dinman J.D."/>
            <person name="Dragon F."/>
            <person name="Ellis S.R."/>
            <person name="Lafontaine D.L.J."/>
            <person name="Lindahl L."/>
            <person name="Liljas A."/>
            <person name="Lipton J.M."/>
            <person name="McAlear M.A."/>
            <person name="Moore P.B."/>
            <person name="Noller H.F."/>
            <person name="Ortega J."/>
            <person name="Panse V.G."/>
            <person name="Ramakrishnan V."/>
            <person name="Spahn C.M.T."/>
            <person name="Steitz T.A."/>
            <person name="Tchorzewski M."/>
            <person name="Tollervey D."/>
            <person name="Warren A.J."/>
            <person name="Williamson J.R."/>
            <person name="Wilson D."/>
            <person name="Yonath A."/>
            <person name="Yusupov M."/>
        </authorList>
    </citation>
    <scope>NOMENCLATURE</scope>
</reference>
<reference key="17">
    <citation type="journal article" date="1998" name="EMBO J.">
        <title>The NMR structure of Escherichia coli ribosomal protein L25 shows homology to general stress proteins and glutaminyl-tRNA synthetases.</title>
        <authorList>
            <person name="Stoldt M."/>
            <person name="Woehnert J."/>
            <person name="Goerlach M."/>
            <person name="Brown L.R."/>
        </authorList>
    </citation>
    <scope>STRUCTURE BY NMR IN COMPLEX WITH A FRAGMENT OF 5S RRNA</scope>
    <source>
        <strain>MRE-600</strain>
    </source>
</reference>
<reference key="18">
    <citation type="journal article" date="1999" name="EMBO J.">
        <title>The NMR structure of the 5S rRNA E-domain-protein L25 complex shows preformed and induced recognition.</title>
        <authorList>
            <person name="Stoldt M."/>
            <person name="Woehnert J."/>
            <person name="Ohlenschlaeger O."/>
            <person name="Goerlach M."/>
            <person name="Brown L.R."/>
        </authorList>
    </citation>
    <scope>STRUCTURE BY NMR IN COMPLEX WITH A FRAGMENT OF 5S RRNA</scope>
</reference>
<reference key="19">
    <citation type="journal article" date="2000" name="Proc. Natl. Acad. Sci. U.S.A.">
        <title>Structure of Escherichia coli ribosomal protein L25 complexed with a 5S rRNA fragment at 1.8-A resolution.</title>
        <authorList>
            <person name="Lu M."/>
            <person name="Steitz T.A."/>
        </authorList>
    </citation>
    <scope>X-RAY CRYSTALLOGRAPHY (1.8 ANGSTROMS) BOUND TO A FRAGMENT OF 5S RRNA</scope>
</reference>
<reference key="20">
    <citation type="journal article" date="2000" name="J. Mol. Biol.">
        <title>The 3D arrangement of the 23 S and 5 S rRNA in the Escherichia coli 50 S ribosomal subunit based on a cryo-electron microscopic reconstruction at 7.5 A resolution.</title>
        <authorList>
            <person name="Mueller F."/>
            <person name="Sommer I."/>
            <person name="Baranov P."/>
            <person name="Matadeen R."/>
            <person name="Stoldt M."/>
            <person name="Woehnert J."/>
            <person name="Goerlach M."/>
            <person name="van Heel M."/>
            <person name="Brimacombe R."/>
        </authorList>
    </citation>
    <scope>3D-STRUCTURE MODELING</scope>
    <scope>SUBUNIT</scope>
</reference>
<reference key="21">
    <citation type="journal article" date="2003" name="Cell">
        <title>Study of the structural dynamics of the E. coli 70S ribosome using real-space refinement.</title>
        <authorList>
            <person name="Gao H."/>
            <person name="Sengupta J."/>
            <person name="Valle M."/>
            <person name="Korostelev A."/>
            <person name="Eswar N."/>
            <person name="Stagg S.M."/>
            <person name="Van Roey P."/>
            <person name="Agrawal R.K."/>
            <person name="Harvey S.C."/>
            <person name="Sali A."/>
            <person name="Chapman M.S."/>
            <person name="Frank J."/>
        </authorList>
    </citation>
    <scope>STRUCTURE BY ELECTRON MICROSCOPY (11.50 ANGSTROMS)</scope>
    <scope>SUBUNIT</scope>
    <source>
        <strain>MRE-600</strain>
    </source>
</reference>
<reference key="22">
    <citation type="journal article" date="2005" name="Science">
        <title>Structures of the bacterial ribosome at 3.5 A resolution.</title>
        <authorList>
            <person name="Schuwirth B.S."/>
            <person name="Borovinskaya M.A."/>
            <person name="Hau C.W."/>
            <person name="Zhang W."/>
            <person name="Vila-Sanjurjo A."/>
            <person name="Holton J.M."/>
            <person name="Cate J.H.D."/>
        </authorList>
    </citation>
    <scope>X-RAY CRYSTALLOGRAPHY (3.46 ANGSTROMS) OF 2 DIFFERENT RIBOSOME STRUCTURES</scope>
    <scope>SUBUNIT</scope>
    <source>
        <strain>MRE-600</strain>
    </source>
</reference>
<reference key="23">
    <citation type="journal article" date="2014" name="Cell Rep.">
        <title>Molecular basis for the ribosome functioning as an L-tryptophan sensor.</title>
        <authorList>
            <person name="Bischoff L."/>
            <person name="Berninghausen O."/>
            <person name="Beckmann R."/>
        </authorList>
    </citation>
    <scope>STRUCTURE BY ELECTRON MICROSCOPY (3.80 ANGSTROMS) OF TNAC-STALLED 50S RIBOSOMAL SUBUNIT</scope>
    <scope>SUBUNIT</scope>
    <source>
        <strain>K12 / A19 / KC6</strain>
    </source>
</reference>
<reference key="24">
    <citation type="journal article" date="2014" name="PLoS Biol.">
        <title>Structural and functional insights into the mode of action of a universally conserved Obg GTPase.</title>
        <authorList>
            <person name="Feng B."/>
            <person name="Mandava C.S."/>
            <person name="Guo Q."/>
            <person name="Wang J."/>
            <person name="Cao W."/>
            <person name="Li N."/>
            <person name="Zhang Y."/>
            <person name="Zhang Y."/>
            <person name="Wang Z."/>
            <person name="Wu J."/>
            <person name="Sanyal S."/>
            <person name="Lei J."/>
            <person name="Gao N."/>
        </authorList>
    </citation>
    <scope>STRUCTURE BY ELECTRON MICROSCOPY (5.5 ANGSTROMS) OF 50S RIBOSOMAL SUBUNIT IN COMPLEX WITH OBGE AND GMP-PNP</scope>
    <scope>SUBUNIT</scope>
</reference>
<reference key="25">
    <citation type="journal article" date="2017" name="Nature">
        <title>Mechanistic insights into the alternative translation termination by ArfA and RF2.</title>
        <authorList>
            <person name="Ma C."/>
            <person name="Kurita D."/>
            <person name="Li N."/>
            <person name="Chen Y."/>
            <person name="Himeno H."/>
            <person name="Gao N."/>
        </authorList>
    </citation>
    <scope>STRUCTURE BY ELECTRON MICROSCOPY (3.0 ANGSTROMS) OF 70S RIBOSOME IN COMPLEX WITH ARFA AND RF2</scope>
    <scope>SUBUNIT</scope>
</reference>
<reference key="26">
    <citation type="journal article" date="2017" name="Nature">
        <title>Structural basis for ArfA-RF2-mediated translation termination on mRNAs lacking stop codons.</title>
        <authorList>
            <person name="Huter P."/>
            <person name="Mueller C."/>
            <person name="Beckert B."/>
            <person name="Arenz S."/>
            <person name="Berninghausen O."/>
            <person name="Beckmann R."/>
            <person name="Wilson D.N."/>
        </authorList>
    </citation>
    <scope>STRUCTURE BY ELECTRON MICROSCOPY (3.1 ANGSTROMS) OF 70S RIBOSOME IN COMPLEX WITH ARFA AND RF2</scope>
    <scope>SUBUNIT</scope>
</reference>
<reference key="27">
    <citation type="journal article" date="2016" name="Science">
        <title>Translational termination without a stop codon.</title>
        <authorList>
            <person name="James N.R."/>
            <person name="Brown A."/>
            <person name="Gordiyenko Y."/>
            <person name="Ramakrishnan V."/>
        </authorList>
    </citation>
    <scope>STRUCTURE BY ELECTRON MICROSCOPY (2.97 ANGSTROMS) OF 70S RIBOSOME IN COMPLEX WITH ARFA AND RF2</scope>
    <scope>SUBUNIT</scope>
</reference>
<reference key="28">
    <citation type="journal article" date="2017" name="Nature">
        <title>Structural basis of co-translational quality control by ArfA and RF2 bound to ribosome.</title>
        <authorList>
            <person name="Zeng F."/>
            <person name="Chen Y."/>
            <person name="Remis J."/>
            <person name="Shekhar M."/>
            <person name="Phillips J.C."/>
            <person name="Tajkhorshid E."/>
            <person name="Jin H."/>
        </authorList>
    </citation>
    <scope>STRUCTURE BY ELECTRON MICROSCOPY (3.52 ANGSTROMS) OF 70S RIBOSOME IN COMPLEX WITH ARFA AND RF2</scope>
    <scope>SUBUNIT</scope>
</reference>
<gene>
    <name type="primary">rplY</name>
    <name type="ordered locus">b2185</name>
    <name type="ordered locus">JW2173</name>
</gene>
<comment type="function">
    <text evidence="14 15 16">This is one of the proteins that binds to the 5S RNA in the ribosome where it forms part of the central protuberance. Binds to the 5S rRNA independently of L5 and L18. Not required for binding of the 5S rRNA/L5/L18 subcomplex to 23S rRNA.</text>
</comment>
<comment type="subunit">
    <text evidence="1 2 3 4 5 6 7 8 9 10 11 12 13 14 15 16 17 18">Part of the 50S ribosomal subunit (PubMed:1093874, PubMed:1100506, Ref.4, PubMed:10094780, PubMed:10756104, PubMed:12809609, PubMed:16272117, PubMed:25310980, PubMed:24844575, PubMed:27934701, PubMed:27906160, PubMed:27906161); part of the 5S rRNA/L5/L18/L25 subcomplex (PubMed:354687, PubMed:8925931). Contacts the 5S rRNA (PubMed:10562563, PubMed:10696113, PubMed:3298242).</text>
</comment>
<comment type="mass spectrometry"/>
<comment type="similarity">
    <text evidence="20">Belongs to the bacterial ribosomal protein bL25 family.</text>
</comment>